<comment type="function">
    <text evidence="4 9 10 12 13 19 20 26 27 28 29 30 31 33 34 36 38 41 44">Non-receptor protein-tyrosine kinase that plays an essential role in regulating cell migration, adhesion, spreading, reorganization of the actin cytoskeleton, formation and disassembly of focal adhesions and cell protrusions, cell cycle progression, cell proliferation and apoptosis. Required for early embryonic development and placenta development. Required for embryonic angiogenesis, normal cardiomyocyte migration and proliferation, and normal heart development. Regulates axon growth and neuronal cell migration, axon branching and synapse formation; required for normal development of the nervous system. Plays a role in osteogenesis and differentiation of osteoblasts. Functions in integrin signal transduction, but also in signaling downstream of numerous growth factor receptors, G-protein coupled receptors (GPCR), EPHA2, netrin receptors and LDL receptors. Forms multisubunit signaling complexes with SRC and SRC family members upon activation; this leads to the phosphorylation of additional tyrosine residues, creating binding sites for scaffold proteins, effectors and substrates. Regulates numerous signaling pathways. Promotes activation of phosphatidylinositol 3-kinase and the AKT1 signaling cascade. Promotes activation of MAPK1/ERK2, MAPK3/ERK1 and the MAP kinase signaling cascade. Promotes localized and transient activation of guanine nucleotide exchange factors (GEFs) and GTPase-activating proteins (GAPs), and thereby modulates the activity of Rho family GTPases. Signaling via CAS family members mediates activation of RAC1. Phosphorylates NEDD9 following integrin stimulation (PubMed:25059660). Recruits the ubiquitin ligase MDM2 to P53/TP53 in the nucleus, and thereby regulates P53/TP53 activity, P53/TP53 ubiquitination and proteasomal degradation. Phosphorylates SRC; this increases SRC kinase activity. Phosphorylates ACTN1, ARHGEF7, GRB7, RET and WASL. Promotes phosphorylation of PXN and STAT1; most likely PXN and STAT1 are phosphorylated by a SRC family kinase that is recruited to autophosphorylated PTK2/FAK1, rather than by PTK2/FAK1 itself. Promotes phosphorylation of BCAR1; GIT2 and SHC1; this requires both SRC and PTK2/FAK1. Promotes phosphorylation of BMX and PIK3R1.</text>
</comment>
<comment type="function">
    <molecule>Isoform 9</molecule>
    <text evidence="4">Does not contain a kinase domain and inhibits PTK2/FAK1 phosphorylation and signaling. Its enhanced expression can attenuate the nuclear accumulation of LPXN and limit its ability to enhance serum response factor (SRF)-dependent gene transcription (By similarity).</text>
</comment>
<comment type="catalytic activity">
    <reaction evidence="7 9 23 39">
        <text>L-tyrosyl-[protein] + ATP = O-phospho-L-tyrosyl-[protein] + ADP + H(+)</text>
        <dbReference type="Rhea" id="RHEA:10596"/>
        <dbReference type="Rhea" id="RHEA-COMP:10136"/>
        <dbReference type="Rhea" id="RHEA-COMP:20101"/>
        <dbReference type="ChEBI" id="CHEBI:15378"/>
        <dbReference type="ChEBI" id="CHEBI:30616"/>
        <dbReference type="ChEBI" id="CHEBI:46858"/>
        <dbReference type="ChEBI" id="CHEBI:61978"/>
        <dbReference type="ChEBI" id="CHEBI:456216"/>
        <dbReference type="EC" id="2.7.10.2"/>
    </reaction>
</comment>
<comment type="activity regulation">
    <text evidence="39">Subject to autoinhibition, mediated by interactions between the FERM domain and the kinase domain. Activated by autophosphorylation at Tyr-397. This promotes interaction with SRC and phosphorylation at Tyr-576 and Tyr-577 in the kinase activation loop by SRC. Phosphorylation at Tyr-397, Tyr-576 and Tyr-577 is required for maximal kinase activity.</text>
</comment>
<comment type="subunit">
    <text evidence="4 11 12 15 16 17 18 19 21 22 24 25 29 30 33 35 36 37 40 41 42 43 44 45 46 47">Interacts with GIT1. Component of a complex that contains at least FER, CTTN and PTK2/FAK1. Interacts with BMX. Interacts with STEAP4. Interacts with ZFYVE21. Interacts with ESR1. Interacts with FGR, FLT4 and RET. Interacts with EPHA2 in resting cells; activation of EPHA2 recruits PTPN11, leading to dephosphorylation of PTK2/FAK1 and dissociation of the complex. Interacts with EPHA1 (kinase activity-dependent) (By similarity). Interacts with MISP (By similarity). Interacts with PIAS1. Interacts with ARHGAP26 and SHC1. Interacts with RB1CC1; this inhibits PTK2/FAK1 activity and activation of downstream signaling pathways. Interacts with P53/TP53. Interacts with STAT1. Interacts with WASL. Interacts with ARHGEF7. Interacts with DCC. Interacts (via first Pro-rich region) with CAS family members (via SH3 domain), including BCAR1, BCAR3 and CASS4. Interacts with NEDD9 (via C-terminus) (PubMed:25059660). Interacts with SORBS1. Interacts with ARHGEF28. Interacts with SHB. Part of a complex composed of THSD1, PTK2/FAK1, TLN1 and VCL (By similarity). Interacts with PXN and TLN1. Interacts with TGFB1I1. Interacts with PIK3R1 or PIK3R2. Interacts with SRC, GRB2 and GRB7. Interacts with LPXN (via LD motif 3). Interacts with CD36. Interacts with EMP2; regulates PTK2 activation and localization (By similarity). Interacts with DSCAM (PubMed:22685302). Interacts with AMBRA1 (PubMed:28362576). Interacts (when tyrosine-phosphorylated) with tensin TNS1; the interaction is increased by phosphorylation of TNS1 (By similarity).</text>
</comment>
<comment type="interaction">
    <interactant intactId="EBI-77070">
        <id>P34152</id>
    </interactant>
    <interactant intactId="EBI-77088">
        <id>Q61140</id>
        <label>Bcar1</label>
    </interactant>
    <organismsDiffer>false</organismsDiffer>
    <experiments>3</experiments>
</comment>
<comment type="interaction">
    <interactant intactId="EBI-77070">
        <id>P34152</id>
    </interactant>
    <interactant intactId="EBI-537711">
        <id>P54763</id>
        <label>Ephb2</label>
    </interactant>
    <organismsDiffer>false</organismsDiffer>
    <experiments>3</experiments>
</comment>
<comment type="interaction">
    <interactant intactId="EBI-77070">
        <id>P34152</id>
    </interactant>
    <interactant intactId="EBI-397964">
        <id>P11627</id>
        <label>L1cam</label>
    </interactant>
    <organismsDiffer>false</organismsDiffer>
    <experiments>4</experiments>
</comment>
<comment type="interaction">
    <interactant intactId="EBI-77070">
        <id>P34152</id>
    </interactant>
    <interactant intactId="EBI-1555129">
        <id>P97333</id>
        <label>Nrp1</label>
    </interactant>
    <organismsDiffer>false</organismsDiffer>
    <experiments>2</experiments>
</comment>
<comment type="interaction">
    <interactant intactId="EBI-77070">
        <id>P34152</id>
    </interactant>
    <interactant intactId="EBI-983394">
        <id>Q8VI36</id>
        <label>Pxn</label>
    </interactant>
    <organismsDiffer>false</organismsDiffer>
    <experiments>5</experiments>
</comment>
<comment type="interaction">
    <interactant intactId="EBI-77070">
        <id>P34152</id>
    </interactant>
    <interactant intactId="EBI-401755">
        <id>P62993</id>
        <label>GRB2</label>
    </interactant>
    <organismsDiffer>true</organismsDiffer>
    <experiments>3</experiments>
</comment>
<comment type="interaction">
    <interactant intactId="EBI-77070">
        <id>P34152</id>
    </interactant>
    <interactant intactId="EBI-968788">
        <id>P18031</id>
        <label>PTPN1</label>
    </interactant>
    <organismsDiffer>true</organismsDiffer>
    <experiments>2</experiments>
</comment>
<comment type="interaction">
    <interactant intactId="EBI-77070">
        <id>P34152</id>
    </interactant>
    <interactant intactId="EBI-621482">
        <id>P12931</id>
        <label>SRC</label>
    </interactant>
    <organismsDiffer>true</organismsDiffer>
    <experiments>2</experiments>
</comment>
<comment type="subcellular location">
    <subcellularLocation>
        <location evidence="23">Cell junction</location>
        <location evidence="23">Focal adhesion</location>
    </subcellularLocation>
    <subcellularLocation>
        <location evidence="3">Cell membrane</location>
        <topology evidence="3">Peripheral membrane protein</topology>
        <orientation evidence="3">Cytoplasmic side</orientation>
    </subcellularLocation>
    <subcellularLocation>
        <location evidence="20">Cytoplasm</location>
        <location evidence="20">Perinuclear region</location>
    </subcellularLocation>
    <subcellularLocation>
        <location>Cytoplasm</location>
        <location>Cell cortex</location>
    </subcellularLocation>
    <subcellularLocation>
        <location evidence="2">Cytoplasm</location>
        <location evidence="2">Cytoskeleton</location>
    </subcellularLocation>
    <subcellularLocation>
        <location>Cytoplasm</location>
        <location>Cytoskeleton</location>
        <location>Microtubule organizing center</location>
        <location>Centrosome</location>
    </subcellularLocation>
    <subcellularLocation>
        <location evidence="30">Nucleus</location>
    </subcellularLocation>
    <subcellularLocation>
        <location evidence="4">Cytoplasm</location>
        <location evidence="4">Cytoskeleton</location>
        <location evidence="4">Cilium basal body</location>
    </subcellularLocation>
    <subcellularLocation>
        <location evidence="30">Cytoplasm</location>
    </subcellularLocation>
    <text evidence="20">Constituent of focal adhesions. Detected at microtubules.</text>
</comment>
<comment type="alternative products">
    <event type="alternative promoter"/>
    <event type="alternative splicing"/>
    <isoform>
        <id>P34152-3</id>
        <name>3</name>
        <sequence type="displayed"/>
    </isoform>
    <isoform>
        <id>P34152-2</id>
        <name>2</name>
        <sequence type="described" ref="VSP_060036"/>
    </isoform>
    <isoform>
        <id>P34152-4</id>
        <name>4</name>
        <sequence type="described" ref="VSP_060042"/>
    </isoform>
    <isoform>
        <id>P34152-5</id>
        <name>5</name>
        <sequence type="described" ref="VSP_060037 VSP_060039 VSP_060043 VSP_060044"/>
    </isoform>
    <isoform>
        <id>P34152-6</id>
        <name>6</name>
        <sequence type="described" ref="VSP_060043 VSP_060044"/>
    </isoform>
    <isoform>
        <id>P34152-7</id>
        <name>7</name>
        <sequence type="described" ref="VSP_060038 VSP_060039 VSP_060040 VSP_060041"/>
    </isoform>
    <isoform>
        <id>P34152-8</id>
        <name>8</name>
        <sequence type="described" ref="VSP_060035"/>
    </isoform>
    <isoform>
        <id>P34152-9</id>
        <name>9</name>
        <name>FRNK</name>
        <sequence type="described" ref="VSP_060034"/>
    </isoform>
</comment>
<comment type="developmental stage">
    <molecule>Isoform 9</molecule>
    <text evidence="32">Detected in neonate myocardium; levels are low directly after birth but high five to fifteen days after birth, and not detectable in adults.</text>
</comment>
<comment type="domain">
    <text>The first Pro-rich domain interacts with the SH3 domain of CAS family members, such as BCAR1 and NEDD9.</text>
</comment>
<comment type="domain">
    <text>The C-terminal region is the site of focal adhesion targeting (FAT) sequence which mediates the localization of FAK1 to focal adhesions.</text>
</comment>
<comment type="PTM">
    <text evidence="9 10 14 20 22 23 35 39 41 42 43 44 48">Phosphorylated on tyrosine residues upon activation, e.g. upon integrin signaling. Tyr-397 is the major autophosphorylation site, but other kinases can also phosphorylate this residue. Phosphorylation at Tyr-397 promotes interaction with SRC and SRC family members, leading to phosphorylation at Tyr-576, Tyr-577 and at additional tyrosine residues. FGR promotes phosphorylation at Tyr-397 and Tyr-576. FER promotes phosphorylation at Tyr-577, Tyr-861 and Tyr-925, even when cells are not adherent. Tyr-397, Tyr-576 and Ser-722 are phosphorylated only when cells are adherent. Phosphorylation at Tyr-397 is important for interaction with BMX, PIK3R1 and SHC1. Phosphorylation at Tyr-925 is important for interaction with GRB2. Dephosphorylated by PTPN11; PTPN11 is recruited to PTK2 via EPHA2 (tyrosine phosphorylated). Microtubule-induced dephosphorylation at Tyr-397 is crucial for the induction of focal adhesion disassembly; this dephosphorylation could be catalyzed by PTPN11 and regulated by ZFYVE21. Phosphorylation on tyrosine residues is enhanced by NTN1 (PubMed:22685302).</text>
</comment>
<comment type="PTM">
    <text evidence="1">Sumoylated; this enhances autophosphorylation.</text>
</comment>
<comment type="disruption phenotype">
    <text evidence="26 28 30 38">Embryonically lethal. Embryos die at about 8.5 dpc, despite normal implantation. Embryos do not develop a normal head fold, neural tube or heart tube. Endothelial-specific gene disruption is lethal at about 11 dpc, due to defects in embryonic angiogenesis.</text>
</comment>
<comment type="miscellaneous">
    <molecule>Isoform 9</molecule>
    <text evidence="49">Produced by alternative promoter usage.</text>
</comment>
<comment type="similarity">
    <text evidence="6">Belongs to the protein kinase superfamily. Tyr protein kinase family. FAK subfamily.</text>
</comment>
<comment type="sequence caution" evidence="49">
    <conflict type="erroneous initiation">
        <sequence resource="EMBL-CDS" id="BAC37757"/>
    </conflict>
    <text>Extended N-terminus.</text>
</comment>
<comment type="sequence caution" evidence="49">
    <conflict type="erroneous initiation">
        <sequence resource="EMBL-CDS" id="BAD90317"/>
    </conflict>
    <text>Extended N-terminus.</text>
</comment>
<comment type="sequence caution" evidence="49">
    <molecule>Isoform 6</molecule>
    <conflict type="miscellaneous discrepancy">
        <sequence resource="EMBL" id="BC030180"/>
    </conflict>
    <text>a stop codon in position 912 which was translated as Trp to extend the sequence.</text>
</comment>
<name>FAK1_MOUSE</name>
<sequence>MAAAYLDPNLNHTPSSSTKTHLGTGMERSPGAMERVLKVFHYFESSSEPTTWASIIRHGDATDVRGIIQKIVDSHKVKHVACYGFRLSHLRSEEVHWLHVDMGVSSVREKYELAHPPEEWKYELRIRYLPKGFLNQFTEDKPTLNFFYQQVKSDYMQEIADQVDQEIALKLGCLEIRRSYWEMRGNALEKKSNYEVLEKDVGLKRFFPKSLLDSVKAKTLRKLIQQTFRQFANLNREESILKFFEILSPVYRFDKECFKCALGSSWIISVELAIGPEEGISYLTDKGCNPTHLADFNQVQTIQYSNSEDKDRKGMLQLKIAGAPEPLTVTAPSLTIAENMADLIDGYCRLVNGATQSFIIRPQKEGERALPSIPKLANSEKQGMRTHAVSVSETDDYAEIIDEEDTYTMPSTRDYEIQRERIELGRCIGEGQFGDVHQGVYLSPENPALAVAIKTCKNCTSDSVREKFLQEALTMRQFDHPHIVKLIGVITENPVWIIMELCTLGELRSFLQVRKYSLDLASLILYAYQLSTALAYLESKRFVHRDIAARNVLVSSNDCVKLGDFGLSRYMEDSTYYKASKGKLPIKWMAPESINFRRFTSASDVWMFGVCMWEILMHGVKPFQGVKNNDVIGRIENGERLPMPPNCPPTLYSLMTKCWAYDPSRRPRFTELKAQLSTILEEEKVQQEERMRMESRRQATVSWDSGGSDEAPPKPSRPGYPSPRSSEGFYPSPQHMVQTNHYQVSGYPGSHGIPAMAGSIYQGQASLLDQTELWNHRPQEMSMWQPSVEDSAALDLRGMGQVLPPHLMEERLIRQQQEMEEDQRWLEKEERFLKPDVRLSRGSIDREDGSFQGPTGNQHIYQPVGKPDPAAPPKKPPRPGAPGHLSNLSSISSPADSYNEGVKLQPQEISPPPTANLDRSNDKVYENVTGLVKAVIEMSSKIQPAPPEEYVPMVKEVGLALRTLLATVDETIPALPASTHREIEMAQKLLNSDLGELISKMKLAQQYVMTSLQQEYKKQMLTAAHALAVDAKNLLDVIDQARLKMLGQTRPH</sequence>
<accession>P34152</accession>
<accession>O08578</accession>
<accession>Q5DTH7</accession>
<accession>Q8C513</accession>
<accession>Q8CFH7</accession>
<accession>Q8CHM2</accession>
<accession>Q8K2S0</accession>
<accession>Q9DAW3</accession>
<dbReference type="EC" id="2.7.10.2"/>
<dbReference type="EMBL" id="M95408">
    <property type="protein sequence ID" value="AAA37592.1"/>
    <property type="molecule type" value="mRNA"/>
</dbReference>
<dbReference type="EMBL" id="AB030035">
    <property type="protein sequence ID" value="BAC53924.1"/>
    <property type="molecule type" value="mRNA"/>
</dbReference>
<dbReference type="EMBL" id="AB011499">
    <property type="protein sequence ID" value="BAC53890.1"/>
    <property type="molecule type" value="mRNA"/>
</dbReference>
<dbReference type="EMBL" id="AK005468">
    <property type="protein sequence ID" value="BAB24058.1"/>
    <property type="molecule type" value="mRNA"/>
</dbReference>
<dbReference type="EMBL" id="AK079821">
    <property type="protein sequence ID" value="BAC37757.1"/>
    <property type="status" value="ALT_INIT"/>
    <property type="molecule type" value="mRNA"/>
</dbReference>
<dbReference type="EMBL" id="AK220543">
    <property type="protein sequence ID" value="BAD90317.1"/>
    <property type="status" value="ALT_INIT"/>
    <property type="molecule type" value="mRNA"/>
</dbReference>
<dbReference type="EMBL" id="BC030180">
    <property type="status" value="NOT_ANNOTATED_CDS"/>
    <property type="molecule type" value="mRNA"/>
</dbReference>
<dbReference type="EMBL" id="AH005806">
    <property type="protein sequence ID" value="AAB95262.1"/>
    <property type="molecule type" value="Genomic_DNA"/>
</dbReference>
<dbReference type="EMBL" id="AH005806">
    <property type="protein sequence ID" value="AAB95263.1"/>
    <property type="molecule type" value="Genomic_DNA"/>
</dbReference>
<dbReference type="EMBL" id="U77074">
    <property type="protein sequence ID" value="AAB51229.1"/>
    <property type="molecule type" value="Genomic_DNA"/>
</dbReference>
<dbReference type="CCDS" id="CCDS37099.1">
    <molecule id="P34152-3"/>
</dbReference>
<dbReference type="PIR" id="A46166">
    <property type="entry name" value="A46166"/>
</dbReference>
<dbReference type="RefSeq" id="NP_001123881.1">
    <property type="nucleotide sequence ID" value="NM_001130409.1"/>
</dbReference>
<dbReference type="RefSeq" id="NP_032008.2">
    <molecule id="P34152-3"/>
    <property type="nucleotide sequence ID" value="NM_007982.2"/>
</dbReference>
<dbReference type="RefSeq" id="XP_006520496.1">
    <property type="nucleotide sequence ID" value="XM_006520433.2"/>
</dbReference>
<dbReference type="RefSeq" id="XP_030104191.1">
    <molecule id="P34152-4"/>
    <property type="nucleotide sequence ID" value="XM_030248331.1"/>
</dbReference>
<dbReference type="RefSeq" id="XP_030104192.1">
    <molecule id="P34152-4"/>
    <property type="nucleotide sequence ID" value="XM_030248332.2"/>
</dbReference>
<dbReference type="RefSeq" id="XP_036015042.1">
    <molecule id="P34152-4"/>
    <property type="nucleotide sequence ID" value="XM_036159149.1"/>
</dbReference>
<dbReference type="PDB" id="1K40">
    <property type="method" value="X-ray"/>
    <property type="resolution" value="2.25 A"/>
    <property type="chains" value="A=921-1046"/>
</dbReference>
<dbReference type="PDB" id="5F28">
    <property type="method" value="X-ray"/>
    <property type="resolution" value="2.90 A"/>
    <property type="chains" value="E/F/G=904-1052"/>
</dbReference>
<dbReference type="PDB" id="6BZ3">
    <property type="method" value="X-ray"/>
    <property type="resolution" value="2.50 A"/>
    <property type="chains" value="A/C=921-1046"/>
</dbReference>
<dbReference type="PDBsum" id="1K40"/>
<dbReference type="PDBsum" id="5F28"/>
<dbReference type="PDBsum" id="6BZ3"/>
<dbReference type="SMR" id="P34152"/>
<dbReference type="BioGRID" id="199587">
    <property type="interactions" value="52"/>
</dbReference>
<dbReference type="CORUM" id="P34152"/>
<dbReference type="DIP" id="DIP-31045N"/>
<dbReference type="ELM" id="P34152"/>
<dbReference type="FunCoup" id="P34152">
    <property type="interactions" value="3176"/>
</dbReference>
<dbReference type="IntAct" id="P34152">
    <property type="interactions" value="24"/>
</dbReference>
<dbReference type="MINT" id="P34152"/>
<dbReference type="STRING" id="10090.ENSMUSP00000105663"/>
<dbReference type="BindingDB" id="P34152"/>
<dbReference type="ChEMBL" id="CHEMBL1075288"/>
<dbReference type="GlyGen" id="P34152">
    <property type="glycosylation" value="2 sites"/>
</dbReference>
<dbReference type="iPTMnet" id="P34152"/>
<dbReference type="PhosphoSitePlus" id="P34152"/>
<dbReference type="SwissPalm" id="P34152"/>
<dbReference type="jPOST" id="P34152"/>
<dbReference type="PaxDb" id="10090-ENSMUSP00000105663"/>
<dbReference type="PeptideAtlas" id="P34152"/>
<dbReference type="ProteomicsDB" id="275852">
    <molecule id="P34152-3"/>
</dbReference>
<dbReference type="ProteomicsDB" id="275853">
    <molecule id="P34152-2"/>
</dbReference>
<dbReference type="ProteomicsDB" id="275854">
    <molecule id="P34152-3"/>
</dbReference>
<dbReference type="ProteomicsDB" id="275855">
    <molecule id="P34152-4"/>
</dbReference>
<dbReference type="ProteomicsDB" id="275856">
    <molecule id="P34152-5"/>
</dbReference>
<dbReference type="ProteomicsDB" id="275857">
    <molecule id="P34152-6"/>
</dbReference>
<dbReference type="ProteomicsDB" id="275858">
    <molecule id="P34152-7"/>
</dbReference>
<dbReference type="ProteomicsDB" id="275859">
    <molecule id="P34152-8"/>
</dbReference>
<dbReference type="ProteomicsDB" id="275860">
    <molecule id="P34152-9"/>
</dbReference>
<dbReference type="Pumba" id="P34152"/>
<dbReference type="Antibodypedia" id="725">
    <property type="antibodies" value="2881 antibodies from 50 providers"/>
</dbReference>
<dbReference type="DNASU" id="14083"/>
<dbReference type="Ensembl" id="ENSMUST00000110036.11">
    <molecule id="P34152-3"/>
    <property type="protein sequence ID" value="ENSMUSP00000105663.3"/>
    <property type="gene ID" value="ENSMUSG00000022607.19"/>
</dbReference>
<dbReference type="Ensembl" id="ENSMUST00000226988.3">
    <molecule id="P34152-4"/>
    <property type="protein sequence ID" value="ENSMUSP00000154242.2"/>
    <property type="gene ID" value="ENSMUSG00000022607.19"/>
</dbReference>
<dbReference type="Ensembl" id="ENSMUST00000228180.3">
    <molecule id="P34152-8"/>
    <property type="protein sequence ID" value="ENSMUSP00000155470.2"/>
    <property type="gene ID" value="ENSMUSG00000022607.19"/>
</dbReference>
<dbReference type="GeneID" id="14083"/>
<dbReference type="KEGG" id="mmu:14083"/>
<dbReference type="UCSC" id="uc007wbw.2">
    <molecule id="P34152-4"/>
    <property type="organism name" value="mouse"/>
</dbReference>
<dbReference type="UCSC" id="uc007wbx.2">
    <molecule id="P34152-3"/>
    <property type="organism name" value="mouse"/>
</dbReference>
<dbReference type="UCSC" id="uc007wby.2">
    <molecule id="P34152-5"/>
    <property type="organism name" value="mouse"/>
</dbReference>
<dbReference type="UCSC" id="uc007wbz.2">
    <molecule id="P34152-6"/>
    <property type="organism name" value="mouse"/>
</dbReference>
<dbReference type="UCSC" id="uc007wca.1">
    <molecule id="P34152-8"/>
    <property type="organism name" value="mouse"/>
</dbReference>
<dbReference type="AGR" id="MGI:95481"/>
<dbReference type="CTD" id="5747"/>
<dbReference type="MGI" id="MGI:95481">
    <property type="gene designation" value="Ptk2"/>
</dbReference>
<dbReference type="VEuPathDB" id="HostDB:ENSMUSG00000022607"/>
<dbReference type="eggNOG" id="KOG4257">
    <property type="taxonomic scope" value="Eukaryota"/>
</dbReference>
<dbReference type="GeneTree" id="ENSGT00940000155113"/>
<dbReference type="HOGENOM" id="CLU_002646_0_0_1"/>
<dbReference type="InParanoid" id="P34152"/>
<dbReference type="OMA" id="HCTNTAE"/>
<dbReference type="PhylomeDB" id="P34152"/>
<dbReference type="TreeFam" id="TF316643"/>
<dbReference type="BRENDA" id="2.7.10.2">
    <property type="organism ID" value="3474"/>
</dbReference>
<dbReference type="Reactome" id="R-MMU-111465">
    <property type="pathway name" value="Apoptotic cleavage of cellular proteins"/>
</dbReference>
<dbReference type="Reactome" id="R-MMU-2029482">
    <property type="pathway name" value="Regulation of actin dynamics for phagocytic cup formation"/>
</dbReference>
<dbReference type="Reactome" id="R-MMU-354192">
    <property type="pathway name" value="Integrin signaling"/>
</dbReference>
<dbReference type="Reactome" id="R-MMU-354194">
    <property type="pathway name" value="GRB2:SOS provides linkage to MAPK signaling for Integrins"/>
</dbReference>
<dbReference type="Reactome" id="R-MMU-372708">
    <property type="pathway name" value="p130Cas linkage to MAPK signaling for integrins"/>
</dbReference>
<dbReference type="Reactome" id="R-MMU-375165">
    <property type="pathway name" value="NCAM signaling for neurite out-growth"/>
</dbReference>
<dbReference type="Reactome" id="R-MMU-3928662">
    <property type="pathway name" value="EPHB-mediated forward signaling"/>
</dbReference>
<dbReference type="Reactome" id="R-MMU-418885">
    <property type="pathway name" value="DCC mediated attractive signaling"/>
</dbReference>
<dbReference type="Reactome" id="R-MMU-4420097">
    <property type="pathway name" value="VEGFA-VEGFR2 Pathway"/>
</dbReference>
<dbReference type="Reactome" id="R-MMU-5663213">
    <property type="pathway name" value="RHO GTPases Activate WASPs and WAVEs"/>
</dbReference>
<dbReference type="Reactome" id="R-MMU-5673001">
    <property type="pathway name" value="RAF/MAP kinase cascade"/>
</dbReference>
<dbReference type="Reactome" id="R-MMU-8874081">
    <property type="pathway name" value="MET activates PTK2 signaling"/>
</dbReference>
<dbReference type="Reactome" id="R-MMU-9009391">
    <property type="pathway name" value="Extra-nuclear estrogen signaling"/>
</dbReference>
<dbReference type="Reactome" id="R-MMU-9860927">
    <property type="pathway name" value="Turbulent (oscillatory, disturbed) flow shear stress activates signaling by PIEZO1 and integrins in endothelial cells"/>
</dbReference>
<dbReference type="BioGRID-ORCS" id="14083">
    <property type="hits" value="4 hits in 82 CRISPR screens"/>
</dbReference>
<dbReference type="ChiTaRS" id="Ptk2">
    <property type="organism name" value="mouse"/>
</dbReference>
<dbReference type="EvolutionaryTrace" id="P34152"/>
<dbReference type="PRO" id="PR:P34152"/>
<dbReference type="Proteomes" id="UP000000589">
    <property type="component" value="Chromosome 15"/>
</dbReference>
<dbReference type="RNAct" id="P34152">
    <property type="molecule type" value="protein"/>
</dbReference>
<dbReference type="Bgee" id="ENSMUSG00000022607">
    <property type="expression patterns" value="Expressed in metanephric ureteric bud and 275 other cell types or tissues"/>
</dbReference>
<dbReference type="ExpressionAtlas" id="P34152">
    <property type="expression patterns" value="baseline and differential"/>
</dbReference>
<dbReference type="GO" id="GO:0016324">
    <property type="term" value="C:apical plasma membrane"/>
    <property type="evidence" value="ECO:0000314"/>
    <property type="project" value="MGI"/>
</dbReference>
<dbReference type="GO" id="GO:0005938">
    <property type="term" value="C:cell cortex"/>
    <property type="evidence" value="ECO:0007669"/>
    <property type="project" value="UniProtKB-SubCell"/>
</dbReference>
<dbReference type="GO" id="GO:0005813">
    <property type="term" value="C:centrosome"/>
    <property type="evidence" value="ECO:0007669"/>
    <property type="project" value="UniProtKB-SubCell"/>
</dbReference>
<dbReference type="GO" id="GO:0036064">
    <property type="term" value="C:ciliary basal body"/>
    <property type="evidence" value="ECO:0000250"/>
    <property type="project" value="UniProtKB"/>
</dbReference>
<dbReference type="GO" id="GO:0005829">
    <property type="term" value="C:cytosol"/>
    <property type="evidence" value="ECO:0000304"/>
    <property type="project" value="Reactome"/>
</dbReference>
<dbReference type="GO" id="GO:0005925">
    <property type="term" value="C:focal adhesion"/>
    <property type="evidence" value="ECO:0000314"/>
    <property type="project" value="UniProtKB"/>
</dbReference>
<dbReference type="GO" id="GO:0098978">
    <property type="term" value="C:glutamatergic synapse"/>
    <property type="evidence" value="ECO:0000314"/>
    <property type="project" value="SynGO"/>
</dbReference>
<dbReference type="GO" id="GO:0030027">
    <property type="term" value="C:lamellipodium"/>
    <property type="evidence" value="ECO:0000314"/>
    <property type="project" value="MGI"/>
</dbReference>
<dbReference type="GO" id="GO:0005634">
    <property type="term" value="C:nucleus"/>
    <property type="evidence" value="ECO:0000314"/>
    <property type="project" value="UniProtKB"/>
</dbReference>
<dbReference type="GO" id="GO:0048471">
    <property type="term" value="C:perinuclear region of cytoplasm"/>
    <property type="evidence" value="ECO:0007669"/>
    <property type="project" value="UniProtKB-SubCell"/>
</dbReference>
<dbReference type="GO" id="GO:0005524">
    <property type="term" value="F:ATP binding"/>
    <property type="evidence" value="ECO:0007669"/>
    <property type="project" value="UniProtKB-KW"/>
</dbReference>
<dbReference type="GO" id="GO:0004715">
    <property type="term" value="F:non-membrane spanning protein tyrosine kinase activity"/>
    <property type="evidence" value="ECO:0000315"/>
    <property type="project" value="UniProtKB"/>
</dbReference>
<dbReference type="GO" id="GO:0004713">
    <property type="term" value="F:protein tyrosine kinase activity"/>
    <property type="evidence" value="ECO:0000314"/>
    <property type="project" value="UniProtKB"/>
</dbReference>
<dbReference type="GO" id="GO:0001525">
    <property type="term" value="P:angiogenesis"/>
    <property type="evidence" value="ECO:0000315"/>
    <property type="project" value="MGI"/>
</dbReference>
<dbReference type="GO" id="GO:0007409">
    <property type="term" value="P:axonogenesis"/>
    <property type="evidence" value="ECO:0000315"/>
    <property type="project" value="MGI"/>
</dbReference>
<dbReference type="GO" id="GO:0001568">
    <property type="term" value="P:blood vessel development"/>
    <property type="evidence" value="ECO:0000315"/>
    <property type="project" value="MGI"/>
</dbReference>
<dbReference type="GO" id="GO:0016477">
    <property type="term" value="P:cell migration"/>
    <property type="evidence" value="ECO:0000304"/>
    <property type="project" value="MGI"/>
</dbReference>
<dbReference type="GO" id="GO:0071560">
    <property type="term" value="P:cellular response to transforming growth factor beta stimulus"/>
    <property type="evidence" value="ECO:0000314"/>
    <property type="project" value="MGI"/>
</dbReference>
<dbReference type="GO" id="GO:0021955">
    <property type="term" value="P:central nervous system neuron axonogenesis"/>
    <property type="evidence" value="ECO:0000315"/>
    <property type="project" value="MGI"/>
</dbReference>
<dbReference type="GO" id="GO:0043542">
    <property type="term" value="P:endothelial cell migration"/>
    <property type="evidence" value="ECO:0000315"/>
    <property type="project" value="MGI"/>
</dbReference>
<dbReference type="GO" id="GO:0048013">
    <property type="term" value="P:ephrin receptor signaling pathway"/>
    <property type="evidence" value="ECO:0000250"/>
    <property type="project" value="UniProtKB"/>
</dbReference>
<dbReference type="GO" id="GO:0030198">
    <property type="term" value="P:extracellular matrix organization"/>
    <property type="evidence" value="ECO:0000315"/>
    <property type="project" value="MGI"/>
</dbReference>
<dbReference type="GO" id="GO:0007229">
    <property type="term" value="P:integrin-mediated signaling pathway"/>
    <property type="evidence" value="ECO:0000250"/>
    <property type="project" value="UniProtKB"/>
</dbReference>
<dbReference type="GO" id="GO:0000226">
    <property type="term" value="P:microtubule cytoskeleton organization"/>
    <property type="evidence" value="ECO:0000314"/>
    <property type="project" value="MGI"/>
</dbReference>
<dbReference type="GO" id="GO:0043066">
    <property type="term" value="P:negative regulation of apoptotic process"/>
    <property type="evidence" value="ECO:0000250"/>
    <property type="project" value="UniProtKB"/>
</dbReference>
<dbReference type="GO" id="GO:0010507">
    <property type="term" value="P:negative regulation of autophagy"/>
    <property type="evidence" value="ECO:0000314"/>
    <property type="project" value="MGI"/>
</dbReference>
<dbReference type="GO" id="GO:0050771">
    <property type="term" value="P:negative regulation of axonogenesis"/>
    <property type="evidence" value="ECO:0000315"/>
    <property type="project" value="MGI"/>
</dbReference>
<dbReference type="GO" id="GO:0046621">
    <property type="term" value="P:negative regulation of organ growth"/>
    <property type="evidence" value="ECO:0000316"/>
    <property type="project" value="MGI"/>
</dbReference>
<dbReference type="GO" id="GO:0051964">
    <property type="term" value="P:negative regulation of synapse assembly"/>
    <property type="evidence" value="ECO:0000315"/>
    <property type="project" value="MGI"/>
</dbReference>
<dbReference type="GO" id="GO:0001764">
    <property type="term" value="P:neuron migration"/>
    <property type="evidence" value="ECO:0000314"/>
    <property type="project" value="MGI"/>
</dbReference>
<dbReference type="GO" id="GO:0007097">
    <property type="term" value="P:nuclear migration"/>
    <property type="evidence" value="ECO:0000314"/>
    <property type="project" value="MGI"/>
</dbReference>
<dbReference type="GO" id="GO:0035265">
    <property type="term" value="P:organ growth"/>
    <property type="evidence" value="ECO:0000316"/>
    <property type="project" value="MGI"/>
</dbReference>
<dbReference type="GO" id="GO:0018108">
    <property type="term" value="P:peptidyl-tyrosine phosphorylation"/>
    <property type="evidence" value="ECO:0000314"/>
    <property type="project" value="UniProtKB"/>
</dbReference>
<dbReference type="GO" id="GO:0010613">
    <property type="term" value="P:positive regulation of cardiac muscle hypertrophy"/>
    <property type="evidence" value="ECO:0000314"/>
    <property type="project" value="MGI"/>
</dbReference>
<dbReference type="GO" id="GO:0030335">
    <property type="term" value="P:positive regulation of cell migration"/>
    <property type="evidence" value="ECO:0000250"/>
    <property type="project" value="UniProtKB"/>
</dbReference>
<dbReference type="GO" id="GO:0008284">
    <property type="term" value="P:positive regulation of cell population proliferation"/>
    <property type="evidence" value="ECO:0000315"/>
    <property type="project" value="UniProtKB"/>
</dbReference>
<dbReference type="GO" id="GO:0051897">
    <property type="term" value="P:positive regulation of phosphatidylinositol 3-kinase/protein kinase B signal transduction"/>
    <property type="evidence" value="ECO:0000250"/>
    <property type="project" value="UniProtKB"/>
</dbReference>
<dbReference type="GO" id="GO:0045860">
    <property type="term" value="P:positive regulation of protein kinase activity"/>
    <property type="evidence" value="ECO:0000250"/>
    <property type="project" value="UniProtKB"/>
</dbReference>
<dbReference type="GO" id="GO:0001934">
    <property type="term" value="P:positive regulation of protein phosphorylation"/>
    <property type="evidence" value="ECO:0000250"/>
    <property type="project" value="UniProtKB"/>
</dbReference>
<dbReference type="GO" id="GO:2000060">
    <property type="term" value="P:positive regulation of ubiquitin-dependent protein catabolic process"/>
    <property type="evidence" value="ECO:0000315"/>
    <property type="project" value="UniProtKB"/>
</dbReference>
<dbReference type="GO" id="GO:0046777">
    <property type="term" value="P:protein autophosphorylation"/>
    <property type="evidence" value="ECO:0000314"/>
    <property type="project" value="UniProtKB"/>
</dbReference>
<dbReference type="GO" id="GO:0033628">
    <property type="term" value="P:regulation of cell adhesion mediated by integrin"/>
    <property type="evidence" value="ECO:0000250"/>
    <property type="project" value="UniProtKB"/>
</dbReference>
<dbReference type="GO" id="GO:0042127">
    <property type="term" value="P:regulation of cell population proliferation"/>
    <property type="evidence" value="ECO:0000250"/>
    <property type="project" value="UniProtKB"/>
</dbReference>
<dbReference type="GO" id="GO:0008360">
    <property type="term" value="P:regulation of cell shape"/>
    <property type="evidence" value="ECO:0000250"/>
    <property type="project" value="UniProtKB"/>
</dbReference>
<dbReference type="GO" id="GO:1905274">
    <property type="term" value="P:regulation of modification of postsynaptic actin cytoskeleton"/>
    <property type="evidence" value="ECO:0000314"/>
    <property type="project" value="SynGO"/>
</dbReference>
<dbReference type="GO" id="GO:0045667">
    <property type="term" value="P:regulation of osteoblast differentiation"/>
    <property type="evidence" value="ECO:0000250"/>
    <property type="project" value="UniProtKB"/>
</dbReference>
<dbReference type="GO" id="GO:0007172">
    <property type="term" value="P:signal complex assembly"/>
    <property type="evidence" value="ECO:0007669"/>
    <property type="project" value="InterPro"/>
</dbReference>
<dbReference type="GO" id="GO:0001570">
    <property type="term" value="P:vasculogenesis"/>
    <property type="evidence" value="ECO:0000315"/>
    <property type="project" value="MGI"/>
</dbReference>
<dbReference type="CDD" id="cd14473">
    <property type="entry name" value="FERM_B-lobe"/>
    <property type="match status" value="1"/>
</dbReference>
<dbReference type="CDD" id="cd13190">
    <property type="entry name" value="FERM_C_FAK1"/>
    <property type="match status" value="1"/>
</dbReference>
<dbReference type="CDD" id="cd05056">
    <property type="entry name" value="PTKc_FAK"/>
    <property type="match status" value="1"/>
</dbReference>
<dbReference type="FunFam" id="1.20.120.330:FF:000001">
    <property type="entry name" value="focal adhesion kinase 1 isoform X1"/>
    <property type="match status" value="1"/>
</dbReference>
<dbReference type="FunFam" id="2.30.29.30:FF:000058">
    <property type="entry name" value="focal adhesion kinase 1 isoform X1"/>
    <property type="match status" value="1"/>
</dbReference>
<dbReference type="FunFam" id="3.10.20.90:FF:000021">
    <property type="entry name" value="focal adhesion kinase 1 isoform X1"/>
    <property type="match status" value="1"/>
</dbReference>
<dbReference type="FunFam" id="3.30.200.20:FF:000047">
    <property type="entry name" value="focal adhesion kinase 1 isoform X2"/>
    <property type="match status" value="1"/>
</dbReference>
<dbReference type="FunFam" id="1.10.510.10:FF:000039">
    <property type="entry name" value="Focal adhesion kinase, isoform D"/>
    <property type="match status" value="1"/>
</dbReference>
<dbReference type="FunFam" id="1.20.80.10:FF:000004">
    <property type="entry name" value="Protein-tyrosine kinase 2-beta isoform 1"/>
    <property type="match status" value="1"/>
</dbReference>
<dbReference type="Gene3D" id="1.20.80.10">
    <property type="match status" value="1"/>
</dbReference>
<dbReference type="Gene3D" id="1.20.120.330">
    <property type="entry name" value="Nucleotidyltransferases domain 2"/>
    <property type="match status" value="1"/>
</dbReference>
<dbReference type="Gene3D" id="3.10.20.90">
    <property type="entry name" value="Phosphatidylinositol 3-kinase Catalytic Subunit, Chain A, domain 1"/>
    <property type="match status" value="1"/>
</dbReference>
<dbReference type="Gene3D" id="3.30.200.20">
    <property type="entry name" value="Phosphorylase Kinase, domain 1"/>
    <property type="match status" value="1"/>
</dbReference>
<dbReference type="Gene3D" id="2.30.29.30">
    <property type="entry name" value="Pleckstrin-homology domain (PH domain)/Phosphotyrosine-binding domain (PTB)"/>
    <property type="match status" value="1"/>
</dbReference>
<dbReference type="Gene3D" id="1.20.5.540">
    <property type="entry name" value="Single helix bin"/>
    <property type="match status" value="1"/>
</dbReference>
<dbReference type="Gene3D" id="1.10.510.10">
    <property type="entry name" value="Transferase(Phosphotransferase) domain 1"/>
    <property type="match status" value="1"/>
</dbReference>
<dbReference type="InterPro" id="IPR019749">
    <property type="entry name" value="Band_41_domain"/>
</dbReference>
<dbReference type="InterPro" id="IPR041390">
    <property type="entry name" value="FADK_N"/>
</dbReference>
<dbReference type="InterPro" id="IPR049385">
    <property type="entry name" value="FAK1-like_FERM_C"/>
</dbReference>
<dbReference type="InterPro" id="IPR041784">
    <property type="entry name" value="FAK1/PYK2_FERM_C"/>
</dbReference>
<dbReference type="InterPro" id="IPR014352">
    <property type="entry name" value="FERM/acyl-CoA-bd_prot_sf"/>
</dbReference>
<dbReference type="InterPro" id="IPR035963">
    <property type="entry name" value="FERM_2"/>
</dbReference>
<dbReference type="InterPro" id="IPR019748">
    <property type="entry name" value="FERM_central"/>
</dbReference>
<dbReference type="InterPro" id="IPR000299">
    <property type="entry name" value="FERM_domain"/>
</dbReference>
<dbReference type="InterPro" id="IPR036137">
    <property type="entry name" value="Focal_adhe_kin_target_dom_sf"/>
</dbReference>
<dbReference type="InterPro" id="IPR005189">
    <property type="entry name" value="Focal_adhesion_kin_target_dom"/>
</dbReference>
<dbReference type="InterPro" id="IPR011009">
    <property type="entry name" value="Kinase-like_dom_sf"/>
</dbReference>
<dbReference type="InterPro" id="IPR011993">
    <property type="entry name" value="PH-like_dom_sf"/>
</dbReference>
<dbReference type="InterPro" id="IPR000719">
    <property type="entry name" value="Prot_kinase_dom"/>
</dbReference>
<dbReference type="InterPro" id="IPR017441">
    <property type="entry name" value="Protein_kinase_ATP_BS"/>
</dbReference>
<dbReference type="InterPro" id="IPR001245">
    <property type="entry name" value="Ser-Thr/Tyr_kinase_cat_dom"/>
</dbReference>
<dbReference type="InterPro" id="IPR008266">
    <property type="entry name" value="Tyr_kinase_AS"/>
</dbReference>
<dbReference type="InterPro" id="IPR020635">
    <property type="entry name" value="Tyr_kinase_cat_dom"/>
</dbReference>
<dbReference type="InterPro" id="IPR029071">
    <property type="entry name" value="Ubiquitin-like_domsf"/>
</dbReference>
<dbReference type="PANTHER" id="PTHR46221">
    <property type="entry name" value="FERM AND PDZ DOMAIN-CONTAINING PROTEIN FAMILY MEMBER"/>
    <property type="match status" value="1"/>
</dbReference>
<dbReference type="PANTHER" id="PTHR46221:SF12">
    <property type="entry name" value="NON-SPECIFIC PROTEIN-TYROSINE KINASE"/>
    <property type="match status" value="1"/>
</dbReference>
<dbReference type="Pfam" id="PF21477">
    <property type="entry name" value="FERM_C_FAK1"/>
    <property type="match status" value="1"/>
</dbReference>
<dbReference type="Pfam" id="PF00373">
    <property type="entry name" value="FERM_M"/>
    <property type="match status" value="1"/>
</dbReference>
<dbReference type="Pfam" id="PF18038">
    <property type="entry name" value="FERM_N_2"/>
    <property type="match status" value="1"/>
</dbReference>
<dbReference type="Pfam" id="PF03623">
    <property type="entry name" value="Focal_AT"/>
    <property type="match status" value="1"/>
</dbReference>
<dbReference type="Pfam" id="PF07714">
    <property type="entry name" value="PK_Tyr_Ser-Thr"/>
    <property type="match status" value="1"/>
</dbReference>
<dbReference type="PRINTS" id="PR00109">
    <property type="entry name" value="TYRKINASE"/>
</dbReference>
<dbReference type="SMART" id="SM00295">
    <property type="entry name" value="B41"/>
    <property type="match status" value="1"/>
</dbReference>
<dbReference type="SMART" id="SM00219">
    <property type="entry name" value="TyrKc"/>
    <property type="match status" value="1"/>
</dbReference>
<dbReference type="SUPFAM" id="SSF68993">
    <property type="entry name" value="FAT domain of focal adhesion kinase"/>
    <property type="match status" value="1"/>
</dbReference>
<dbReference type="SUPFAM" id="SSF50729">
    <property type="entry name" value="PH domain-like"/>
    <property type="match status" value="1"/>
</dbReference>
<dbReference type="SUPFAM" id="SSF56112">
    <property type="entry name" value="Protein kinase-like (PK-like)"/>
    <property type="match status" value="1"/>
</dbReference>
<dbReference type="SUPFAM" id="SSF47031">
    <property type="entry name" value="Second domain of FERM"/>
    <property type="match status" value="1"/>
</dbReference>
<dbReference type="SUPFAM" id="SSF54236">
    <property type="entry name" value="Ubiquitin-like"/>
    <property type="match status" value="1"/>
</dbReference>
<dbReference type="PROSITE" id="PS00661">
    <property type="entry name" value="FERM_2"/>
    <property type="match status" value="1"/>
</dbReference>
<dbReference type="PROSITE" id="PS50057">
    <property type="entry name" value="FERM_3"/>
    <property type="match status" value="1"/>
</dbReference>
<dbReference type="PROSITE" id="PS00107">
    <property type="entry name" value="PROTEIN_KINASE_ATP"/>
    <property type="match status" value="1"/>
</dbReference>
<dbReference type="PROSITE" id="PS50011">
    <property type="entry name" value="PROTEIN_KINASE_DOM"/>
    <property type="match status" value="1"/>
</dbReference>
<dbReference type="PROSITE" id="PS00109">
    <property type="entry name" value="PROTEIN_KINASE_TYR"/>
    <property type="match status" value="1"/>
</dbReference>
<evidence type="ECO:0000250" key="1"/>
<evidence type="ECO:0000250" key="2">
    <source>
        <dbReference type="UniProtKB" id="O35346"/>
    </source>
</evidence>
<evidence type="ECO:0000250" key="3">
    <source>
        <dbReference type="UniProtKB" id="Q00944"/>
    </source>
</evidence>
<evidence type="ECO:0000250" key="4">
    <source>
        <dbReference type="UniProtKB" id="Q05397"/>
    </source>
</evidence>
<evidence type="ECO:0000255" key="5">
    <source>
        <dbReference type="PROSITE-ProRule" id="PRU00084"/>
    </source>
</evidence>
<evidence type="ECO:0000255" key="6">
    <source>
        <dbReference type="PROSITE-ProRule" id="PRU00159"/>
    </source>
</evidence>
<evidence type="ECO:0000255" key="7">
    <source>
        <dbReference type="PROSITE-ProRule" id="PRU10028"/>
    </source>
</evidence>
<evidence type="ECO:0000256" key="8">
    <source>
        <dbReference type="SAM" id="MobiDB-lite"/>
    </source>
</evidence>
<evidence type="ECO:0000269" key="9">
    <source>
    </source>
</evidence>
<evidence type="ECO:0000269" key="10">
    <source>
    </source>
</evidence>
<evidence type="ECO:0000269" key="11">
    <source>
    </source>
</evidence>
<evidence type="ECO:0000269" key="12">
    <source>
    </source>
</evidence>
<evidence type="ECO:0000269" key="13">
    <source>
    </source>
</evidence>
<evidence type="ECO:0000269" key="14">
    <source>
    </source>
</evidence>
<evidence type="ECO:0000269" key="15">
    <source>
    </source>
</evidence>
<evidence type="ECO:0000269" key="16">
    <source>
    </source>
</evidence>
<evidence type="ECO:0000269" key="17">
    <source>
    </source>
</evidence>
<evidence type="ECO:0000269" key="18">
    <source>
    </source>
</evidence>
<evidence type="ECO:0000269" key="19">
    <source>
    </source>
</evidence>
<evidence type="ECO:0000269" key="20">
    <source>
    </source>
</evidence>
<evidence type="ECO:0000269" key="21">
    <source>
    </source>
</evidence>
<evidence type="ECO:0000269" key="22">
    <source>
    </source>
</evidence>
<evidence type="ECO:0000269" key="23">
    <source>
    </source>
</evidence>
<evidence type="ECO:0000269" key="24">
    <source>
    </source>
</evidence>
<evidence type="ECO:0000269" key="25">
    <source>
    </source>
</evidence>
<evidence type="ECO:0000269" key="26">
    <source>
    </source>
</evidence>
<evidence type="ECO:0000269" key="27">
    <source>
    </source>
</evidence>
<evidence type="ECO:0000269" key="28">
    <source>
    </source>
</evidence>
<evidence type="ECO:0000269" key="29">
    <source>
    </source>
</evidence>
<evidence type="ECO:0000269" key="30">
    <source>
    </source>
</evidence>
<evidence type="ECO:0000269" key="31">
    <source>
    </source>
</evidence>
<evidence type="ECO:0000269" key="32">
    <source>
    </source>
</evidence>
<evidence type="ECO:0000269" key="33">
    <source>
    </source>
</evidence>
<evidence type="ECO:0000269" key="34">
    <source>
    </source>
</evidence>
<evidence type="ECO:0000269" key="35">
    <source>
    </source>
</evidence>
<evidence type="ECO:0000269" key="36">
    <source>
    </source>
</evidence>
<evidence type="ECO:0000269" key="37">
    <source>
    </source>
</evidence>
<evidence type="ECO:0000269" key="38">
    <source>
    </source>
</evidence>
<evidence type="ECO:0000269" key="39">
    <source>
    </source>
</evidence>
<evidence type="ECO:0000269" key="40">
    <source>
    </source>
</evidence>
<evidence type="ECO:0000269" key="41">
    <source>
    </source>
</evidence>
<evidence type="ECO:0000269" key="42">
    <source>
    </source>
</evidence>
<evidence type="ECO:0000269" key="43">
    <source>
    </source>
</evidence>
<evidence type="ECO:0000269" key="44">
    <source>
    </source>
</evidence>
<evidence type="ECO:0000269" key="45">
    <source>
    </source>
</evidence>
<evidence type="ECO:0000269" key="46">
    <source>
    </source>
</evidence>
<evidence type="ECO:0000269" key="47">
    <source>
    </source>
</evidence>
<evidence type="ECO:0000269" key="48">
    <source ref="6"/>
</evidence>
<evidence type="ECO:0000305" key="49"/>
<evidence type="ECO:0000312" key="50">
    <source>
        <dbReference type="MGI" id="MGI:95481"/>
    </source>
</evidence>
<evidence type="ECO:0007744" key="51">
    <source>
    </source>
</evidence>
<evidence type="ECO:0007744" key="52">
    <source>
    </source>
</evidence>
<evidence type="ECO:0007744" key="53">
    <source>
    </source>
</evidence>
<evidence type="ECO:0007744" key="54">
    <source>
    </source>
</evidence>
<evidence type="ECO:0007829" key="55">
    <source>
        <dbReference type="PDB" id="1K40"/>
    </source>
</evidence>
<evidence type="ECO:0007829" key="56">
    <source>
        <dbReference type="PDB" id="6BZ3"/>
    </source>
</evidence>
<keyword id="KW-0002">3D-structure</keyword>
<keyword id="KW-0007">Acetylation</keyword>
<keyword id="KW-0877">Alternative promoter usage</keyword>
<keyword id="KW-0025">Alternative splicing</keyword>
<keyword id="KW-0037">Angiogenesis</keyword>
<keyword id="KW-0067">ATP-binding</keyword>
<keyword id="KW-0965">Cell junction</keyword>
<keyword id="KW-1003">Cell membrane</keyword>
<keyword id="KW-0966">Cell projection</keyword>
<keyword id="KW-0963">Cytoplasm</keyword>
<keyword id="KW-0206">Cytoskeleton</keyword>
<keyword id="KW-0217">Developmental protein</keyword>
<keyword id="KW-0903">Direct protein sequencing</keyword>
<keyword id="KW-1017">Isopeptide bond</keyword>
<keyword id="KW-0418">Kinase</keyword>
<keyword id="KW-0472">Membrane</keyword>
<keyword id="KW-0547">Nucleotide-binding</keyword>
<keyword id="KW-0539">Nucleus</keyword>
<keyword id="KW-0597">Phosphoprotein</keyword>
<keyword id="KW-1185">Reference proteome</keyword>
<keyword id="KW-0808">Transferase</keyword>
<keyword id="KW-0829">Tyrosine-protein kinase</keyword>
<keyword id="KW-0832">Ubl conjugation</keyword>
<organism>
    <name type="scientific">Mus musculus</name>
    <name type="common">Mouse</name>
    <dbReference type="NCBI Taxonomy" id="10090"/>
    <lineage>
        <taxon>Eukaryota</taxon>
        <taxon>Metazoa</taxon>
        <taxon>Chordata</taxon>
        <taxon>Craniata</taxon>
        <taxon>Vertebrata</taxon>
        <taxon>Euteleostomi</taxon>
        <taxon>Mammalia</taxon>
        <taxon>Eutheria</taxon>
        <taxon>Euarchontoglires</taxon>
        <taxon>Glires</taxon>
        <taxon>Rodentia</taxon>
        <taxon>Myomorpha</taxon>
        <taxon>Muroidea</taxon>
        <taxon>Muridae</taxon>
        <taxon>Murinae</taxon>
        <taxon>Mus</taxon>
        <taxon>Mus</taxon>
    </lineage>
</organism>
<protein>
    <recommendedName>
        <fullName evidence="49">Focal adhesion kinase 1</fullName>
        <shortName>FADK 1</shortName>
        <ecNumber>2.7.10.2</ecNumber>
    </recommendedName>
    <alternativeName>
        <fullName>Focal adhesion kinase-related nonkinase</fullName>
        <shortName>FRNK</shortName>
    </alternativeName>
    <alternativeName>
        <fullName>Protein-tyrosine kinase 2</fullName>
    </alternativeName>
    <alternativeName>
        <fullName>p125FAK</fullName>
    </alternativeName>
    <alternativeName>
        <fullName>pp125FAK</fullName>
    </alternativeName>
</protein>
<feature type="initiator methionine" description="Removed" evidence="48">
    <location>
        <position position="1"/>
    </location>
</feature>
<feature type="chain" id="PRO_0000088078" description="Focal adhesion kinase 1">
    <location>
        <begin position="2"/>
        <end position="1052"/>
    </location>
</feature>
<feature type="domain" description="FERM" evidence="5">
    <location>
        <begin position="35"/>
        <end position="355"/>
    </location>
</feature>
<feature type="domain" description="Protein kinase" evidence="6">
    <location>
        <begin position="431"/>
        <end position="680"/>
    </location>
</feature>
<feature type="region of interest" description="Disordered" evidence="8">
    <location>
        <begin position="1"/>
        <end position="27"/>
    </location>
</feature>
<feature type="region of interest" description="Disordered" evidence="8">
    <location>
        <begin position="685"/>
        <end position="734"/>
    </location>
</feature>
<feature type="region of interest" description="Interaction with TGFB1I1" evidence="1">
    <location>
        <begin position="707"/>
        <end position="1052"/>
    </location>
</feature>
<feature type="region of interest" description="Disordered" evidence="8">
    <location>
        <begin position="837"/>
        <end position="921"/>
    </location>
</feature>
<feature type="region of interest" description="Interaction with ARHGEF28" evidence="19">
    <location>
        <begin position="912"/>
        <end position="1052"/>
    </location>
</feature>
<feature type="compositionally biased region" description="Polar residues" evidence="8">
    <location>
        <begin position="10"/>
        <end position="21"/>
    </location>
</feature>
<feature type="compositionally biased region" description="Basic and acidic residues" evidence="8">
    <location>
        <begin position="685"/>
        <end position="697"/>
    </location>
</feature>
<feature type="compositionally biased region" description="Basic and acidic residues" evidence="8">
    <location>
        <begin position="837"/>
        <end position="849"/>
    </location>
</feature>
<feature type="compositionally biased region" description="Pro residues" evidence="8">
    <location>
        <begin position="869"/>
        <end position="880"/>
    </location>
</feature>
<feature type="compositionally biased region" description="Polar residues" evidence="8">
    <location>
        <begin position="886"/>
        <end position="896"/>
    </location>
</feature>
<feature type="active site" description="Proton acceptor" evidence="6 7">
    <location>
        <position position="546"/>
    </location>
</feature>
<feature type="binding site" evidence="6">
    <location>
        <begin position="428"/>
        <end position="434"/>
    </location>
    <ligand>
        <name>ATP</name>
        <dbReference type="ChEBI" id="CHEBI:30616"/>
    </ligand>
</feature>
<feature type="binding site" evidence="6">
    <location>
        <position position="454"/>
    </location>
    <ligand>
        <name>ATP</name>
        <dbReference type="ChEBI" id="CHEBI:30616"/>
    </ligand>
</feature>
<feature type="binding site" evidence="6">
    <location>
        <begin position="500"/>
        <end position="502"/>
    </location>
    <ligand>
        <name>ATP</name>
        <dbReference type="ChEBI" id="CHEBI:30616"/>
    </ligand>
</feature>
<feature type="modified residue" description="N-acetylalanine" evidence="48">
    <location>
        <position position="2"/>
    </location>
</feature>
<feature type="modified residue" description="Phosphotyrosine" evidence="4">
    <location>
        <position position="5"/>
    </location>
</feature>
<feature type="modified residue" description="Phosphothreonine" evidence="4">
    <location>
        <position position="13"/>
    </location>
</feature>
<feature type="modified residue" description="Phosphoserine" evidence="4">
    <location>
        <position position="29"/>
    </location>
</feature>
<feature type="modified residue" description="Phosphoserine" evidence="54">
    <location>
        <position position="54"/>
    </location>
</feature>
<feature type="modified residue" description="Phosphotyrosine; by autocatalysis" evidence="9 10 14 39 43 51">
    <location>
        <position position="397"/>
    </location>
</feature>
<feature type="modified residue" description="Phosphotyrosine" evidence="14 39">
    <location>
        <position position="407"/>
    </location>
</feature>
<feature type="modified residue" description="Phosphotyrosine" evidence="4">
    <location>
        <position position="570"/>
    </location>
</feature>
<feature type="modified residue" description="Phosphotyrosine; by RET and SRC" evidence="9 14 39 52 53 54">
    <location>
        <position position="576"/>
    </location>
</feature>
<feature type="modified residue" description="Phosphotyrosine; by RET and SRC" evidence="9 14 39 52 53 54">
    <location>
        <position position="577"/>
    </location>
</feature>
<feature type="modified residue" description="Phosphoserine" evidence="4">
    <location>
        <position position="580"/>
    </location>
</feature>
<feature type="modified residue" description="Phosphoserine" evidence="4">
    <location>
        <position position="722"/>
    </location>
</feature>
<feature type="modified residue" description="Phosphoserine; by CDK5" evidence="20">
    <location>
        <position position="732"/>
    </location>
</feature>
<feature type="modified residue" description="Phosphoserine" evidence="4">
    <location>
        <position position="843"/>
    </location>
</feature>
<feature type="modified residue" description="Phosphotyrosine" evidence="14">
    <location>
        <position position="861"/>
    </location>
</feature>
<feature type="modified residue" description="Phosphoserine" evidence="48">
    <location>
        <position position="910"/>
    </location>
</feature>
<feature type="modified residue" description="Phosphothreonine" evidence="4">
    <location>
        <position position="914"/>
    </location>
</feature>
<feature type="modified residue" description="Phosphotyrosine; by SRC" evidence="14 41 42 44 53">
    <location>
        <position position="925"/>
    </location>
</feature>
<feature type="cross-link" description="Glycyl lysine isopeptide (Lys-Gly) (interchain with G-Cter in SUMO)" evidence="1">
    <location>
        <position position="152"/>
    </location>
</feature>
<feature type="splice variant" id="VSP_060034" description="In isoform 9.">
    <location>
        <begin position="1"/>
        <end position="692"/>
    </location>
</feature>
<feature type="splice variant" id="VSP_060035" description="In isoform 8.">
    <location>
        <begin position="199"/>
        <end position="1052"/>
    </location>
</feature>
<feature type="splice variant" id="VSP_060036" description="In isoform 2.">
    <original>S</original>
    <variation>SHCQHKVKKARRFLPLVFCSLEPPPTDEISGD</variation>
    <location>
        <position position="392"/>
    </location>
</feature>
<feature type="splice variant" id="VSP_060037" description="In isoform 5.">
    <original>S</original>
    <variation>SGVSHCQHKVKKARRFLPLVFCSLEPPPTDEISGD</variation>
    <location>
        <position position="392"/>
    </location>
</feature>
<feature type="splice variant" id="VSP_060038" description="In isoform 7.">
    <original>S</original>
    <variation>SDEISGD</variation>
    <location>
        <position position="392"/>
    </location>
</feature>
<feature type="splice variant" id="VSP_060039" description="In isoform 5 and isoform 7.">
    <original>T</original>
    <variation>KSYGIDEA</variation>
    <location>
        <position position="412"/>
    </location>
</feature>
<feature type="splice variant" id="VSP_060040" description="In isoform 7.">
    <original>LTMRQFDHPHIVKLIGVITENPVW</original>
    <variation>SEVIFASKKIQLGPGIFDIICLSA</variation>
    <location>
        <begin position="473"/>
        <end position="496"/>
    </location>
</feature>
<feature type="splice variant" id="VSP_060041" description="In isoform 7.">
    <location>
        <begin position="497"/>
        <end position="1052"/>
    </location>
</feature>
<feature type="splice variant" id="VSP_060042" description="In isoform 4.">
    <original>K</original>
    <variation>KPWR</variation>
    <location>
        <position position="903"/>
    </location>
</feature>
<feature type="splice variant" id="VSP_060043" description="In isoform 5 and isoform 6.">
    <original>LQPQEISPPPTAN</original>
    <variation>VGICACAMWSVPC</variation>
    <location>
        <begin position="904"/>
        <end position="916"/>
    </location>
</feature>
<feature type="splice variant" id="VSP_060044" description="In isoform 5 and isoform 6.">
    <location>
        <begin position="917"/>
        <end position="1052"/>
    </location>
</feature>
<feature type="mutagenesis site" description="Strongly reduced enzyme activity; when associated with 576-F-F-577. Abolishes activation of MAPK1/ERK2 in response to integrin signaling. Abolishes activation of SRC. Abolishes interaction with PIK3R1." evidence="9 39 43">
    <original>Y</original>
    <variation>F</variation>
    <location>
        <position position="397"/>
    </location>
</feature>
<feature type="mutagenesis site" description="Strongly reduced enzyme activity; when associated with F-397." evidence="9 39">
    <original>YY</original>
    <variation>FF</variation>
    <location>
        <begin position="576"/>
        <end position="577"/>
    </location>
</feature>
<feature type="mutagenesis site" description="Abolishes interaction with GRB2." evidence="41 42">
    <original>Y</original>
    <variation>F</variation>
    <location>
        <position position="925"/>
    </location>
</feature>
<feature type="mutagenesis site" description="Loss of interaction with ARHGEF28." evidence="19">
    <original>L</original>
    <variation>S</variation>
    <location>
        <position position="1034"/>
    </location>
</feature>
<feature type="sequence conflict" description="In Ref. 5; BC030180." evidence="49" ref="5">
    <original>A</original>
    <variation>T</variation>
    <location>
        <position position="32"/>
    </location>
</feature>
<feature type="sequence conflict" description="In Ref. 1; AAA37592." evidence="49" ref="1">
    <original>Y</original>
    <variation>H</variation>
    <location>
        <position position="42"/>
    </location>
</feature>
<feature type="sequence conflict" description="In Ref. 3; BAB24058." evidence="49" ref="3">
    <original>L</original>
    <variation>V</variation>
    <location>
        <position position="87"/>
    </location>
</feature>
<feature type="sequence conflict" description="In Ref. 3; BAB24058." evidence="49" ref="3">
    <original>Y</original>
    <variation>D</variation>
    <location>
        <position position="128"/>
    </location>
</feature>
<feature type="sequence conflict" description="In Ref. 3; BAB24058." evidence="49" ref="3">
    <original>F</original>
    <variation>V</variation>
    <location>
        <position position="146"/>
    </location>
</feature>
<feature type="sequence conflict" description="In Ref. 5; BC030180." evidence="49" ref="5">
    <original>Q</original>
    <variation>L</variation>
    <location>
        <position position="157"/>
    </location>
</feature>
<feature type="sequence conflict" description="In Ref. 3; BAC37757." evidence="49" ref="3">
    <original>Q</original>
    <variation>H</variation>
    <location>
        <position position="225"/>
    </location>
</feature>
<feature type="sequence conflict" description="In Ref. 3; BAC37757." evidence="49" ref="3">
    <original>V</original>
    <variation>M</variation>
    <location>
        <position position="250"/>
    </location>
</feature>
<feature type="sequence conflict" description="In Ref. 5; BC030180." evidence="49" ref="5">
    <original>Q</original>
    <variation>P</variation>
    <location>
        <position position="762"/>
    </location>
</feature>
<feature type="helix" evidence="55">
    <location>
        <begin position="922"/>
        <end position="942"/>
    </location>
</feature>
<feature type="helix" evidence="55">
    <location>
        <begin position="947"/>
        <end position="949"/>
    </location>
</feature>
<feature type="helix" evidence="55">
    <location>
        <begin position="951"/>
        <end position="971"/>
    </location>
</feature>
<feature type="helix" evidence="55">
    <location>
        <begin position="972"/>
        <end position="974"/>
    </location>
</feature>
<feature type="helix" evidence="56">
    <location>
        <begin position="977"/>
        <end position="979"/>
    </location>
</feature>
<feature type="helix" evidence="55">
    <location>
        <begin position="980"/>
        <end position="1006"/>
    </location>
</feature>
<feature type="helix" evidence="55">
    <location>
        <begin position="1010"/>
        <end position="1043"/>
    </location>
</feature>
<feature type="modified residue" description="Phosphotyrosine" evidence="49">
    <location sequence="P34152-4">
        <position position="397"/>
    </location>
</feature>
<reference key="1">
    <citation type="journal article" date="1992" name="Proc. Natl. Acad. Sci. U.S.A.">
        <title>Focal adhesion protein-tyrosine kinase phosphorylated in response to cell attachment to fibronectin.</title>
        <authorList>
            <person name="Hanks S.K."/>
            <person name="Calalb M.B."/>
            <person name="Harper M.C."/>
            <person name="Patel S.K."/>
        </authorList>
    </citation>
    <scope>NUCLEOTIDE SEQUENCE [MRNA] (ISOFORM 3)</scope>
    <scope>CATALYTIC ACTIVITY</scope>
    <scope>SUBCELLULAR LOCATION</scope>
    <scope>PHOSPHORYLATION</scope>
    <source>
        <strain>BALB/cJ</strain>
        <tissue>Embryo</tissue>
    </source>
</reference>
<reference key="2">
    <citation type="submission" date="1999-07" db="EMBL/GenBank/DDBJ databases">
        <title>Focal adhesion kinase.</title>
        <authorList>
            <person name="Yamakawa N."/>
        </authorList>
    </citation>
    <scope>NUCLEOTIDE SEQUENCE [MRNA] (ISOFORMS 5 AND 7)</scope>
    <source>
        <strain>BALB/cJ</strain>
        <tissue>Brain</tissue>
        <tissue>Embryo</tissue>
    </source>
</reference>
<reference key="3">
    <citation type="journal article" date="2005" name="Science">
        <title>The transcriptional landscape of the mammalian genome.</title>
        <authorList>
            <person name="Carninci P."/>
            <person name="Kasukawa T."/>
            <person name="Katayama S."/>
            <person name="Gough J."/>
            <person name="Frith M.C."/>
            <person name="Maeda N."/>
            <person name="Oyama R."/>
            <person name="Ravasi T."/>
            <person name="Lenhard B."/>
            <person name="Wells C."/>
            <person name="Kodzius R."/>
            <person name="Shimokawa K."/>
            <person name="Bajic V.B."/>
            <person name="Brenner S.E."/>
            <person name="Batalov S."/>
            <person name="Forrest A.R."/>
            <person name="Zavolan M."/>
            <person name="Davis M.J."/>
            <person name="Wilming L.G."/>
            <person name="Aidinis V."/>
            <person name="Allen J.E."/>
            <person name="Ambesi-Impiombato A."/>
            <person name="Apweiler R."/>
            <person name="Aturaliya R.N."/>
            <person name="Bailey T.L."/>
            <person name="Bansal M."/>
            <person name="Baxter L."/>
            <person name="Beisel K.W."/>
            <person name="Bersano T."/>
            <person name="Bono H."/>
            <person name="Chalk A.M."/>
            <person name="Chiu K.P."/>
            <person name="Choudhary V."/>
            <person name="Christoffels A."/>
            <person name="Clutterbuck D.R."/>
            <person name="Crowe M.L."/>
            <person name="Dalla E."/>
            <person name="Dalrymple B.P."/>
            <person name="de Bono B."/>
            <person name="Della Gatta G."/>
            <person name="di Bernardo D."/>
            <person name="Down T."/>
            <person name="Engstrom P."/>
            <person name="Fagiolini M."/>
            <person name="Faulkner G."/>
            <person name="Fletcher C.F."/>
            <person name="Fukushima T."/>
            <person name="Furuno M."/>
            <person name="Futaki S."/>
            <person name="Gariboldi M."/>
            <person name="Georgii-Hemming P."/>
            <person name="Gingeras T.R."/>
            <person name="Gojobori T."/>
            <person name="Green R.E."/>
            <person name="Gustincich S."/>
            <person name="Harbers M."/>
            <person name="Hayashi Y."/>
            <person name="Hensch T.K."/>
            <person name="Hirokawa N."/>
            <person name="Hill D."/>
            <person name="Huminiecki L."/>
            <person name="Iacono M."/>
            <person name="Ikeo K."/>
            <person name="Iwama A."/>
            <person name="Ishikawa T."/>
            <person name="Jakt M."/>
            <person name="Kanapin A."/>
            <person name="Katoh M."/>
            <person name="Kawasawa Y."/>
            <person name="Kelso J."/>
            <person name="Kitamura H."/>
            <person name="Kitano H."/>
            <person name="Kollias G."/>
            <person name="Krishnan S.P."/>
            <person name="Kruger A."/>
            <person name="Kummerfeld S.K."/>
            <person name="Kurochkin I.V."/>
            <person name="Lareau L.F."/>
            <person name="Lazarevic D."/>
            <person name="Lipovich L."/>
            <person name="Liu J."/>
            <person name="Liuni S."/>
            <person name="McWilliam S."/>
            <person name="Madan Babu M."/>
            <person name="Madera M."/>
            <person name="Marchionni L."/>
            <person name="Matsuda H."/>
            <person name="Matsuzawa S."/>
            <person name="Miki H."/>
            <person name="Mignone F."/>
            <person name="Miyake S."/>
            <person name="Morris K."/>
            <person name="Mottagui-Tabar S."/>
            <person name="Mulder N."/>
            <person name="Nakano N."/>
            <person name="Nakauchi H."/>
            <person name="Ng P."/>
            <person name="Nilsson R."/>
            <person name="Nishiguchi S."/>
            <person name="Nishikawa S."/>
            <person name="Nori F."/>
            <person name="Ohara O."/>
            <person name="Okazaki Y."/>
            <person name="Orlando V."/>
            <person name="Pang K.C."/>
            <person name="Pavan W.J."/>
            <person name="Pavesi G."/>
            <person name="Pesole G."/>
            <person name="Petrovsky N."/>
            <person name="Piazza S."/>
            <person name="Reed J."/>
            <person name="Reid J.F."/>
            <person name="Ring B.Z."/>
            <person name="Ringwald M."/>
            <person name="Rost B."/>
            <person name="Ruan Y."/>
            <person name="Salzberg S.L."/>
            <person name="Sandelin A."/>
            <person name="Schneider C."/>
            <person name="Schoenbach C."/>
            <person name="Sekiguchi K."/>
            <person name="Semple C.A."/>
            <person name="Seno S."/>
            <person name="Sessa L."/>
            <person name="Sheng Y."/>
            <person name="Shibata Y."/>
            <person name="Shimada H."/>
            <person name="Shimada K."/>
            <person name="Silva D."/>
            <person name="Sinclair B."/>
            <person name="Sperling S."/>
            <person name="Stupka E."/>
            <person name="Sugiura K."/>
            <person name="Sultana R."/>
            <person name="Takenaka Y."/>
            <person name="Taki K."/>
            <person name="Tammoja K."/>
            <person name="Tan S.L."/>
            <person name="Tang S."/>
            <person name="Taylor M.S."/>
            <person name="Tegner J."/>
            <person name="Teichmann S.A."/>
            <person name="Ueda H.R."/>
            <person name="van Nimwegen E."/>
            <person name="Verardo R."/>
            <person name="Wei C.L."/>
            <person name="Yagi K."/>
            <person name="Yamanishi H."/>
            <person name="Zabarovsky E."/>
            <person name="Zhu S."/>
            <person name="Zimmer A."/>
            <person name="Hide W."/>
            <person name="Bult C."/>
            <person name="Grimmond S.M."/>
            <person name="Teasdale R.D."/>
            <person name="Liu E.T."/>
            <person name="Brusic V."/>
            <person name="Quackenbush J."/>
            <person name="Wahlestedt C."/>
            <person name="Mattick J.S."/>
            <person name="Hume D.A."/>
            <person name="Kai C."/>
            <person name="Sasaki D."/>
            <person name="Tomaru Y."/>
            <person name="Fukuda S."/>
            <person name="Kanamori-Katayama M."/>
            <person name="Suzuki M."/>
            <person name="Aoki J."/>
            <person name="Arakawa T."/>
            <person name="Iida J."/>
            <person name="Imamura K."/>
            <person name="Itoh M."/>
            <person name="Kato T."/>
            <person name="Kawaji H."/>
            <person name="Kawagashira N."/>
            <person name="Kawashima T."/>
            <person name="Kojima M."/>
            <person name="Kondo S."/>
            <person name="Konno H."/>
            <person name="Nakano K."/>
            <person name="Ninomiya N."/>
            <person name="Nishio T."/>
            <person name="Okada M."/>
            <person name="Plessy C."/>
            <person name="Shibata K."/>
            <person name="Shiraki T."/>
            <person name="Suzuki S."/>
            <person name="Tagami M."/>
            <person name="Waki K."/>
            <person name="Watahiki A."/>
            <person name="Okamura-Oho Y."/>
            <person name="Suzuki H."/>
            <person name="Kawai J."/>
            <person name="Hayashizaki Y."/>
        </authorList>
    </citation>
    <scope>NUCLEOTIDE SEQUENCE [LARGE SCALE MRNA] (ISOFORMS 4 AND 8)</scope>
    <source>
        <strain>C57BL/6J</strain>
        <tissue>Placenta</tissue>
        <tissue>Thymus</tissue>
    </source>
</reference>
<reference key="4">
    <citation type="submission" date="2005-02" db="EMBL/GenBank/DDBJ databases">
        <title>Prediction of the coding sequences of mouse homologues of KIAA gene. The complete nucleotide sequences of mouse KIAA-homologous cDNAs identified by screening of terminal sequences of cDNA clones randomly sampled from size-fractionated libraries.</title>
        <authorList>
            <person name="Okazaki N."/>
            <person name="Kikuno R.F."/>
            <person name="Ohara R."/>
            <person name="Inamoto S."/>
            <person name="Nagase T."/>
            <person name="Ohara O."/>
            <person name="Koga H."/>
        </authorList>
    </citation>
    <scope>NUCLEOTIDE SEQUENCE [LARGE SCALE MRNA] (ISOFORM 3)</scope>
    <source>
        <tissue>Fetal brain</tissue>
    </source>
</reference>
<reference key="5">
    <citation type="journal article" date="2004" name="Genome Res.">
        <title>The status, quality, and expansion of the NIH full-length cDNA project: the Mammalian Gene Collection (MGC).</title>
        <authorList>
            <consortium name="The MGC Project Team"/>
        </authorList>
    </citation>
    <scope>NUCLEOTIDE SEQUENCE [LARGE SCALE MRNA] (ISOFORM 6)</scope>
    <source>
        <strain>Czech II</strain>
        <tissue>Mammary tumor</tissue>
    </source>
</reference>
<reference key="6">
    <citation type="submission" date="2008-03" db="UniProtKB">
        <authorList>
            <person name="Bienvenut W.V."/>
            <person name="Sandilands E."/>
            <person name="Serrels B."/>
            <person name="Brunton V.G."/>
            <person name="Sumpton D.P."/>
            <person name="Frame M.C."/>
        </authorList>
    </citation>
    <scope>PROTEIN SEQUENCE OF 2-19; 39-57; 77-86; 92-121; 132-177; 179-204; 210-218; 222-259; 313-319; 350-381; 386-413; 427-454; 466-508; 551-578; 584-597; 628-665; 669-690; 697-724; 798-838; 847-933; 904-933; 942-955; 963-981 AND 1027-1082</scope>
    <scope>CLEAVAGE OF INITIATOR METHIONINE</scope>
    <scope>ACETYLATION AT ALA-2</scope>
    <scope>PHOSPHORYLATION AT SER-910</scope>
    <scope>IDENTIFICATION BY MASS SPECTROMETRY</scope>
    <source>
        <tissue>Embryonic fibroblast</tissue>
    </source>
</reference>
<reference key="7">
    <citation type="journal article" date="1997" name="J. Biol. Chem.">
        <title>Alternatively spliced focal adhesion kinase in rat brain with increased autophosphorylation activity.</title>
        <authorList>
            <person name="Burgaya F."/>
            <person name="Toutant M."/>
            <person name="Studler J.-M."/>
            <person name="Costa A."/>
            <person name="Le Bert M."/>
            <person name="Gelman M."/>
            <person name="Girault J.A."/>
        </authorList>
    </citation>
    <scope>PARTIAL NUCLEOTIDE SEQUENCE [GENOMIC DNA]</scope>
    <scope>ALTERNATIVE SPLICING (ISOFORM 2)</scope>
    <source>
        <strain>ICR X Swiss Webster</strain>
    </source>
</reference>
<reference key="8">
    <citation type="submission" date="1996-11" db="EMBL/GenBank/DDBJ databases">
        <authorList>
            <person name="Asano H."/>
            <person name="Komiyama H.K."/>
            <person name="Grant S.G."/>
        </authorList>
    </citation>
    <scope>NUCLEOTIDE SEQUENCE [GENOMIC DNA] OF 391-417</scope>
    <source>
        <strain>129/SvJ</strain>
    </source>
</reference>
<reference key="9">
    <citation type="journal article" date="1994" name="Nature">
        <title>Integrin-mediated signal transduction linked to Ras pathway by GRB2 binding to focal adhesion kinase.</title>
        <authorList>
            <person name="Schlaepfer D.D."/>
            <person name="Hanks S.K."/>
            <person name="Hunter T."/>
            <person name="van der Geer P."/>
        </authorList>
    </citation>
    <scope>FUNCTION IN INTEGRIN SIGNALING AND ACTIVATION OF MAP KINASES</scope>
    <scope>INTERACTION WITH GRB2; BCAR1; SHC1 AND SRC</scope>
    <scope>PHOSPHORYLATION AT TYR-925</scope>
    <scope>MUTAGENESIS OF TYR-925</scope>
</reference>
<reference key="10">
    <citation type="journal article" date="1995" name="J. Biol. Chem.">
        <title>Interaction of focal adhesion kinase with cytoskeletal protein talin.</title>
        <authorList>
            <person name="Chen H.C."/>
            <person name="Appeddu P.A."/>
            <person name="Parsons J.T."/>
            <person name="Hildebrand J.D."/>
            <person name="Schaller M.D."/>
            <person name="Guan J.L."/>
        </authorList>
    </citation>
    <scope>INTERACTION WITH TLN1</scope>
</reference>
<reference key="11">
    <citation type="journal article" date="1995" name="Mol. Cell. Biol.">
        <title>Tyrosine phosphorylation of focal adhesion kinase at sites in the catalytic domain regulates kinase activity: a role for Src family kinases.</title>
        <authorList>
            <person name="Calalb M.B."/>
            <person name="Polte T.R."/>
            <person name="Hanks S.K."/>
        </authorList>
    </citation>
    <scope>PHOSPHORYLATION AT TYR-397; TYR-407; TYR-576 AND TYR-577</scope>
    <scope>AUTOPHOSPHORYLATION</scope>
    <scope>CATALYTIC ACTIVITY</scope>
    <scope>MUTAGENESIS OF TYR-397 AND 576-TYR-TYR-577</scope>
    <scope>ACTIVITY REGULATION</scope>
</reference>
<reference key="12">
    <citation type="journal article" date="1995" name="Oncogene">
        <title>Mesodermal defect in late phase of gastrulation by a targeted mutation of focal adhesion kinase, FAK.</title>
        <authorList>
            <person name="Furuta Y."/>
            <person name="Ilic D."/>
            <person name="Kanazawa S."/>
            <person name="Takeda N."/>
            <person name="Yamamoto T."/>
            <person name="Aizawa S."/>
        </authorList>
    </citation>
    <scope>DISRUPTION PHENOTYPE</scope>
    <scope>FUNCTION</scope>
</reference>
<reference key="13">
    <citation type="journal article" date="1996" name="J. Biol. Chem.">
        <title>Phosphorylation of tyrosine 397 in focal adhesion kinase is required for binding phosphatidylinositol 3-kinase.</title>
        <authorList>
            <person name="Chen H.C."/>
            <person name="Appeddu P.A."/>
            <person name="Isoda H."/>
            <person name="Guan J.L."/>
        </authorList>
    </citation>
    <scope>INTERACTION WITH PIK3R1</scope>
    <scope>MUTAGENESIS OF TYR-397</scope>
    <scope>PHOSPHORYLATION AT TYR-397</scope>
</reference>
<reference key="14">
    <citation type="journal article" date="1996" name="Mol. Cell. Biol.">
        <title>Evidence for in vivo phosphorylation of the Grb2 SH2-domain binding site on focal adhesion kinase by Src-family protein-tyrosine kinases.</title>
        <authorList>
            <person name="Schlaepfer D.D."/>
            <person name="Hunter T."/>
        </authorList>
    </citation>
    <scope>PHOSPHORYLATION AT TYR-925</scope>
    <scope>MUTAGENESIS OF TYR-925</scope>
    <scope>INTERACTION WITH GRB2</scope>
</reference>
<reference key="15">
    <citation type="journal article" date="1997" name="J. Biol. Chem.">
        <title>Focal adhesion kinase overexpression enhances ras-dependent integrin signaling to ERK2/mitogen-activated protein kinase through interactions with and activation of c-Src.</title>
        <authorList>
            <person name="Schlaepfer D.D."/>
            <person name="Hunter T."/>
        </authorList>
    </citation>
    <scope>FUNCTION IN PHOSPHORYLATION OF SHC1 AND ACTIVATION OF MAPK1/ERK2</scope>
    <scope>PHOSPHORYLATION AT TYR-925</scope>
    <scope>INTERACTION WITH GRB2</scope>
</reference>
<reference key="16">
    <citation type="journal article" date="1998" name="J. Biol. Chem.">
        <title>Cell adhesion kinase beta forms a complex with a new member, Hic-5, of proteins localized at focal adhesions.</title>
        <authorList>
            <person name="Matsuya M."/>
            <person name="Sasaki H."/>
            <person name="Aoto H."/>
            <person name="Mitaka T."/>
            <person name="Nagura K."/>
            <person name="Ohba T."/>
            <person name="Ishino M."/>
            <person name="Takahashi S."/>
            <person name="Suzuki R."/>
            <person name="Sasaki T."/>
        </authorList>
    </citation>
    <scope>INTERACTION WITH TGFB1I1</scope>
</reference>
<reference key="17">
    <citation type="journal article" date="1998" name="J. Biol. Chem.">
        <title>A role for CAP, a novel, multifunctional Src homology 3 domain-containing protein in formation of actin stress fibers and focal adhesions.</title>
        <authorList>
            <person name="Ribon V."/>
            <person name="Herrera R."/>
            <person name="Kay B.K."/>
            <person name="Saltiel A.R."/>
        </authorList>
    </citation>
    <scope>INTERACTION WITH SORBS1</scope>
</reference>
<reference key="18">
    <citation type="journal article" date="1998" name="J. Biol. Chem.">
        <title>Interaction of Hic-5, A senescence-related protein, with focal adhesion kinase.</title>
        <authorList>
            <person name="Fujita H."/>
            <person name="Kamiguchi K."/>
            <person name="Cho D."/>
            <person name="Shibanuma M."/>
            <person name="Morimoto C."/>
            <person name="Tachibana K."/>
        </authorList>
    </citation>
    <scope>INTERACTION WITH TGFB1I1</scope>
</reference>
<reference key="19">
    <citation type="journal article" date="1999" name="Mol. Cell. Biol.">
        <title>Induced focal adhesion kinase (FAK) expression in FAK-null cells enhances cell spreading and migration requiring both auto- and activation loop phosphorylation sites and inhibits adhesion-dependent tyrosine phosphorylation of Pyk2.</title>
        <authorList>
            <person name="Owen J.D."/>
            <person name="Ruest P.J."/>
            <person name="Fry D.W."/>
            <person name="Hanks S.K."/>
        </authorList>
    </citation>
    <scope>FUNCTION IN CELL SPREADING; MIGRATION AND PHOSPHORYLATION OF BCAR1</scope>
    <scope>CATALYTIC ACTIVITY</scope>
    <scope>AUTOPHOSPHORYLATION</scope>
    <scope>MUTAGENESIS OF TYR-397 AND 576-TYR-TYR-577</scope>
    <scope>PHOSPHORYLATION AT TYR-397; TYR-576 AND TYR-577</scope>
</reference>
<reference key="20">
    <citation type="journal article" date="2000" name="J. Biol. Chem.">
        <title>p130Cas regulates the activity of AND-34, a novel Ral, Rap1, and R-Ras guanine nucleotide exchange factor.</title>
        <authorList>
            <person name="Gotoh T."/>
            <person name="Cai D."/>
            <person name="Tian X."/>
            <person name="Feig L.A."/>
            <person name="Lerner A."/>
        </authorList>
    </citation>
    <scope>INTERACTION WITH BCAR3</scope>
</reference>
<reference key="21">
    <citation type="journal article" date="2000" name="Nat. Cell Biol.">
        <title>FAK integrates growth-factor and integrin signals to promote cell migration.</title>
        <authorList>
            <person name="Sieg D.J."/>
            <person name="Hauck C.R."/>
            <person name="Ilic D."/>
            <person name="Klingbeil C.K."/>
            <person name="Schaefer E."/>
            <person name="Damsky C.H."/>
            <person name="Schlaepfer D.D."/>
        </authorList>
    </citation>
    <scope>FUNCTION</scope>
    <scope>PHOSPHORYLATION AT TYR-397</scope>
</reference>
<reference key="22">
    <citation type="journal article" date="2001" name="J. Biol. Chem.">
        <title>Focal adhesion kinase activates Stat1 in integrin-mediated cell migration and adhesion.</title>
        <authorList>
            <person name="Xie B."/>
            <person name="Zhao J."/>
            <person name="Kitagawa M."/>
            <person name="Durbin J."/>
            <person name="Madri J.A."/>
            <person name="Guan J.L."/>
            <person name="Fu X.Y."/>
        </authorList>
    </citation>
    <scope>INTERACTION WITH STAT1</scope>
    <scope>FUNCTION IN STAT1 PHOSPHORYLATION</scope>
</reference>
<reference key="23">
    <citation type="journal article" date="2001" name="J. Biol. Chem.">
        <title>The cytoskeletal/non-muscle isoform of alpha-actinin is phosphorylated on its actin-binding domain by the focal adhesion kinase.</title>
        <authorList>
            <person name="Izaguirre G."/>
            <person name="Aguirre L."/>
            <person name="Hu Y.P."/>
            <person name="Lee H.Y."/>
            <person name="Schlaepfer D.D."/>
            <person name="Aneskievich B.J."/>
            <person name="Haimovich B."/>
        </authorList>
    </citation>
    <scope>FUNCTION IN PHOSPHORYLATION OF ACTN1</scope>
</reference>
<reference key="24">
    <citation type="journal article" date="2001" name="Oncogene">
        <title>Different modes and qualities of tyrosine phosphorylation of Fak and Pyk2 during epithelial-mesenchymal transdifferentiation and cell migration: analysis of specific phosphorylation events using site-directed antibodies.</title>
        <authorList>
            <person name="Nakamura K."/>
            <person name="Yano H."/>
            <person name="Schaefer E."/>
            <person name="Sabe H."/>
        </authorList>
    </citation>
    <scope>PHOSPHORYLATION AT TYR-397; TYR-407; TYR-576; TYR-577; TYR-861 AND TYR-925</scope>
</reference>
<reference key="25">
    <citation type="journal article" date="2002" name="Mol. Biol. Cell">
        <title>Regulation of focal adhesion kinase by a novel protein inhibitor FIP200.</title>
        <authorList>
            <person name="Abbi S."/>
            <person name="Ueda H."/>
            <person name="Zheng C."/>
            <person name="Cooper L.A."/>
            <person name="Zhao J."/>
            <person name="Christopher R."/>
            <person name="Guan J.L."/>
        </authorList>
    </citation>
    <scope>INTERACTION WITH RB1CC1</scope>
</reference>
<reference key="26">
    <citation type="journal article" date="2003" name="Cell">
        <title>Serine 732 phosphorylation of FAK by Cdk5 is important for microtubule organization, nuclear movement, and neuronal migration.</title>
        <authorList>
            <person name="Xie Z."/>
            <person name="Sanada K."/>
            <person name="Samuels B.A."/>
            <person name="Shih H."/>
            <person name="Tsai L.H."/>
        </authorList>
    </citation>
    <scope>FUNCTION</scope>
    <scope>SUBCELLULAR LOCATION</scope>
    <scope>PHOSPHORYLATION AT SER-732</scope>
</reference>
<reference key="27">
    <citation type="journal article" date="2003" name="Cell. Signal.">
        <title>The Shb adaptor protein causes Src-dependent cell spreading and activation of focal adhesion kinase in murine brain endothelial cells.</title>
        <authorList>
            <person name="Holmqvist K."/>
            <person name="Cross M.J."/>
            <person name="Riley D."/>
            <person name="Welsh M."/>
        </authorList>
    </citation>
    <scope>INTERACTION WITH SHB</scope>
</reference>
<reference key="28">
    <citation type="journal article" date="2003" name="J. Biol. Chem.">
        <title>Direct interaction of focal adhesion kinase with p190RhoGEF.</title>
        <authorList>
            <person name="Zhai J."/>
            <person name="Lin H."/>
            <person name="Nie Z."/>
            <person name="Wu J."/>
            <person name="Canete-Soler R."/>
            <person name="Schlaepfer W.W."/>
            <person name="Schlaepfer D.D."/>
        </authorList>
    </citation>
    <scope>FUNCTION</scope>
    <scope>INTERACTION WITH ARHGEF28</scope>
    <scope>MUTAGENESIS OF LEU-1034</scope>
</reference>
<reference key="29">
    <citation type="journal article" date="2003" name="J. Biol. Chem.">
        <title>PIAS1-mediated sumoylation of focal adhesion kinase activates its autophosphorylation.</title>
        <authorList>
            <person name="Kadare G."/>
            <person name="Toutant M."/>
            <person name="Formstecher E."/>
            <person name="Corvol J.C."/>
            <person name="Carnaud M."/>
            <person name="Boutterin M.C."/>
            <person name="Girault J.A."/>
        </authorList>
    </citation>
    <scope>INTERACTION WITH PIAS1</scope>
</reference>
<reference key="30">
    <citation type="journal article" date="2003" name="J. Bone Miner. Res.">
        <title>Leupaxin is a critical adaptor protein in the adhesion zone of the osteoclast.</title>
        <authorList>
            <person name="Gupta A."/>
            <person name="Lee B.S."/>
            <person name="Khadeer M.A."/>
            <person name="Tang Z."/>
            <person name="Chellaiah M."/>
            <person name="Abu-Amer Y."/>
            <person name="Goldknopf J."/>
            <person name="Hruska K.A."/>
        </authorList>
    </citation>
    <scope>INTERACTION WITH LPXN</scope>
</reference>
<reference key="31">
    <citation type="journal article" date="2004" name="J. Biol. Chem.">
        <title>Focal adhesion kinase regulation of N-WASP subcellular localization and function.</title>
        <authorList>
            <person name="Wu X."/>
            <person name="Suetsugu S."/>
            <person name="Cooper L.A."/>
            <person name="Takenawa T."/>
            <person name="Guan J.L."/>
        </authorList>
    </citation>
    <scope>INTERACTION WITH WASL</scope>
    <scope>PHOSPHORYLATION OF WASL</scope>
</reference>
<reference key="32">
    <citation type="journal article" date="2004" name="Nat. Neurosci.">
        <title>Focal adhesion kinase in netrin-1 signaling.</title>
        <authorList>
            <person name="Ren X.R."/>
            <person name="Ming G.L."/>
            <person name="Xie Y."/>
            <person name="Hong Y."/>
            <person name="Sun D.M."/>
            <person name="Zhao Z.Q."/>
            <person name="Feng Z."/>
            <person name="Wang Q."/>
            <person name="Shim S."/>
            <person name="Chen Z.F."/>
            <person name="Song H.J."/>
            <person name="Mei L."/>
            <person name="Xiong W.C."/>
        </authorList>
    </citation>
    <scope>INTERACTION WITH DCC</scope>
</reference>
<reference key="33">
    <citation type="journal article" date="2004" name="Nat. Neurosci.">
        <title>Activation of FAK and Src are receptor-proximal events required for netrin signaling.</title>
        <authorList>
            <person name="Li W."/>
            <person name="Lee J."/>
            <person name="Vikis H.G."/>
            <person name="Lee S.H."/>
            <person name="Liu G."/>
            <person name="Aurandt J."/>
            <person name="Shen T.L."/>
            <person name="Fearon E.R."/>
            <person name="Guan J.L."/>
            <person name="Han M."/>
            <person name="Rao Y."/>
            <person name="Hong K."/>
            <person name="Guan K.L."/>
        </authorList>
    </citation>
    <scope>INTERACTION WITH DCC</scope>
</reference>
<reference key="34">
    <citation type="journal article" date="2005" name="J. Cell Biol.">
        <title>Conditional knockout of focal adhesion kinase in endothelial cells reveals its role in angiogenesis and vascular development in late embryogenesis.</title>
        <authorList>
            <person name="Shen T.L."/>
            <person name="Park A.Y."/>
            <person name="Alcaraz A."/>
            <person name="Peng X."/>
            <person name="Jang I."/>
            <person name="Koni P."/>
            <person name="Flavell R.A."/>
            <person name="Gu H."/>
            <person name="Guan J.L."/>
        </authorList>
    </citation>
    <scope>DISRUPTION PHENOTYPE</scope>
    <scope>FUNCTION</scope>
</reference>
<reference key="35">
    <citation type="journal article" date="2005" name="Mol. Biol. Cell">
        <title>Src and FAK kinases cooperate to phosphorylate paxillin kinase linker, stimulate its focal adhesion localization, and regulate cell spreading and protrusiveness.</title>
        <authorList>
            <person name="Brown M.C."/>
            <person name="Cary L.A."/>
            <person name="Jamieson J.S."/>
            <person name="Cooper J.A."/>
            <person name="Turner C.E."/>
        </authorList>
    </citation>
    <scope>FUNCTION</scope>
</reference>
<reference key="36">
    <citation type="journal article" date="2005" name="Nat. Biotechnol.">
        <title>Immunoaffinity profiling of tyrosine phosphorylation in cancer cells.</title>
        <authorList>
            <person name="Rush J."/>
            <person name="Moritz A."/>
            <person name="Lee K.A."/>
            <person name="Guo A."/>
            <person name="Goss V.L."/>
            <person name="Spek E.J."/>
            <person name="Zhang H."/>
            <person name="Zha X.-M."/>
            <person name="Polakiewicz R.D."/>
            <person name="Comb M.J."/>
        </authorList>
    </citation>
    <scope>PHOSPHORYLATION [LARGE SCALE ANALYSIS] AT TYR-397</scope>
    <scope>IDENTIFICATION BY MASS SPECTROMETRY [LARGE SCALE ANALYSIS]</scope>
</reference>
<reference key="37">
    <citation type="journal article" date="2006" name="J. Cell Biol.">
        <title>Endothelial FAK is essential for vascular network stability, cell survival, and lamellipodial formation.</title>
        <authorList>
            <person name="Braren R."/>
            <person name="Hu H."/>
            <person name="Kim Y.H."/>
            <person name="Beggs H.E."/>
            <person name="Reichardt L.F."/>
            <person name="Wang R."/>
        </authorList>
    </citation>
    <scope>DISRUPTION PHENOTYPE</scope>
    <scope>FUNCTION</scope>
</reference>
<reference key="38">
    <citation type="journal article" date="2007" name="Mol. Biol. Cell">
        <title>FAK potentiates Rac1 activation and localization to matrix adhesion sites: a role for betaPIX.</title>
        <authorList>
            <person name="Chang F."/>
            <person name="Lemmon C.A."/>
            <person name="Park D."/>
            <person name="Romer L.H."/>
        </authorList>
    </citation>
    <scope>FUNCTION IN CELL SPREADING; PHOSPHORYLATION OF ARHGEF7; RAC1 TARGETING TO FOCAL ADHESIONS AND RAC1 ACTIVATION</scope>
    <scope>INTERACTION WITH ARHGEF7</scope>
</reference>
<reference key="39">
    <citation type="journal article" date="2007" name="Proc. Natl. Acad. Sci. U.S.A.">
        <title>Large-scale phosphorylation analysis of mouse liver.</title>
        <authorList>
            <person name="Villen J."/>
            <person name="Beausoleil S.A."/>
            <person name="Gerber S.A."/>
            <person name="Gygi S.P."/>
        </authorList>
    </citation>
    <scope>PHOSPHORYLATION [LARGE SCALE ANALYSIS] AT TYR-576 AND TYR-577</scope>
    <scope>IDENTIFICATION BY MASS SPECTROMETRY [LARGE SCALE ANALYSIS]</scope>
    <source>
        <tissue>Liver</tissue>
    </source>
</reference>
<reference key="40">
    <citation type="journal article" date="2008" name="J. Proteome Res.">
        <title>Large-scale identification and evolution indexing of tyrosine phosphorylation sites from murine brain.</title>
        <authorList>
            <person name="Ballif B.A."/>
            <person name="Carey G.R."/>
            <person name="Sunyaev S.R."/>
            <person name="Gygi S.P."/>
        </authorList>
    </citation>
    <scope>PHOSPHORYLATION [LARGE SCALE ANALYSIS] AT TYR-576; TYR-577 AND TYR-925</scope>
    <scope>IDENTIFICATION BY MASS SPECTROMETRY [LARGE SCALE ANALYSIS]</scope>
    <source>
        <tissue>Brain</tissue>
    </source>
</reference>
<reference key="41">
    <citation type="journal article" date="2008" name="Mol. Cell">
        <title>Nuclear FAK promotes cell proliferation and survival through FERM-enhanced p53 degradation.</title>
        <authorList>
            <person name="Lim S.T."/>
            <person name="Chen X.L."/>
            <person name="Lim Y."/>
            <person name="Hanson D.A."/>
            <person name="Vo T.T."/>
            <person name="Howerton K."/>
            <person name="Larocque N."/>
            <person name="Fisher S.J."/>
            <person name="Schlaepfer D.D."/>
            <person name="Ilic D."/>
        </authorList>
    </citation>
    <scope>DISRUPTION PHENOTYPE</scope>
    <scope>FUNCTION IN REGULATION OF P53/TP53 LEVELS; CELL PROLIFERATION AND CELL SURVIVAL</scope>
    <scope>INTERACTION WITH MDM2</scope>
    <scope>SUBCELLULAR LOCATION</scope>
</reference>
<reference key="42">
    <citation type="journal article" date="2009" name="Circ. Res.">
        <title>Transient expression of FRNK reveals stage-specific requirement for focal adhesion kinase activity in cardiac growth.</title>
        <authorList>
            <person name="DiMichele L.A."/>
            <person name="Hakim Z.S."/>
            <person name="Sayers R.L."/>
            <person name="Rojas M."/>
            <person name="Schwartz R.J."/>
            <person name="Mack C.P."/>
            <person name="Taylor J.M."/>
        </authorList>
    </citation>
    <scope>DEVELOPMENTAL STAGE (ISOFORM 9)</scope>
</reference>
<reference key="43">
    <citation type="journal article" date="2009" name="J. Biol. Chem.">
        <title>Tyrosine phosphorylation of growth factor receptor-bound protein-7 by focal adhesion kinase in the regulation of cell migration, proliferation, and tumorigenesis.</title>
        <authorList>
            <person name="Chu P.Y."/>
            <person name="Huang L.Y."/>
            <person name="Hsu C.H."/>
            <person name="Liang C.C."/>
            <person name="Guan J.L."/>
            <person name="Hung T.H."/>
            <person name="Shen T.L."/>
        </authorList>
    </citation>
    <scope>FUNCTION IN PHOSPHORYLATION OF GRB7</scope>
    <scope>INTERACTION WITH GRB7</scope>
</reference>
<reference key="44">
    <citation type="journal article" date="2009" name="J. Clin. Invest.">
        <title>Ras- and PI3K-dependent breast tumorigenesis in mice and humans requires focal adhesion kinase signaling.</title>
        <authorList>
            <person name="Pylayeva Y."/>
            <person name="Gillen K.M."/>
            <person name="Gerald W."/>
            <person name="Beggs H.E."/>
            <person name="Reichardt L.F."/>
            <person name="Giancotti F.G."/>
        </authorList>
    </citation>
    <scope>FUNCTION IN SRC-MEDIATED PHOSPHORYLATION OF BCAR1</scope>
    <scope>ROLE IN DISEASE</scope>
</reference>
<reference key="45">
    <citation type="journal article" date="2010" name="Cell">
        <title>A tissue-specific atlas of mouse protein phosphorylation and expression.</title>
        <authorList>
            <person name="Huttlin E.L."/>
            <person name="Jedrychowski M.P."/>
            <person name="Elias J.E."/>
            <person name="Goswami T."/>
            <person name="Rad R."/>
            <person name="Beausoleil S.A."/>
            <person name="Villen J."/>
            <person name="Haas W."/>
            <person name="Sowa M.E."/>
            <person name="Gygi S.P."/>
        </authorList>
    </citation>
    <scope>PHOSPHORYLATION [LARGE SCALE ANALYSIS] AT SER-54; TYR-576 AND TYR-577</scope>
    <scope>IDENTIFICATION BY MASS SPECTROMETRY [LARGE SCALE ANALYSIS]</scope>
    <source>
        <tissue>Brain</tissue>
        <tissue>Brown adipose tissue</tissue>
        <tissue>Heart</tissue>
        <tissue>Kidney</tissue>
        <tissue>Liver</tissue>
        <tissue>Lung</tissue>
        <tissue>Pancreas</tissue>
        <tissue>Testis</tissue>
    </source>
</reference>
<reference key="46">
    <citation type="journal article" date="2012" name="J. Mol. Cell. Cardiol.">
        <title>Focal adhesion kinase governs cardiac concentric hypertrophic growth by activating the AKT and mTOR pathways.</title>
        <authorList>
            <person name="Clemente C.F."/>
            <person name="Xavier-Neto J."/>
            <person name="Dalla Costa A.P."/>
            <person name="Consonni S.R."/>
            <person name="Antunes J.E."/>
            <person name="Rocco S.A."/>
            <person name="Pereira M.B."/>
            <person name="Judice C.C."/>
            <person name="Strauss B."/>
            <person name="Joazeiro P.P."/>
            <person name="Matos-Souza J.R."/>
            <person name="Franchini K.G."/>
        </authorList>
    </citation>
    <scope>FUNCTION</scope>
</reference>
<reference key="47">
    <citation type="journal article" date="2012" name="J. Biol. Chem.">
        <title>Down syndrome cell adhesion molecule (DSCAM) associates with uncoordinated-5C (UNC5C) in netrin-1-mediated growth cone collapse.</title>
        <authorList>
            <person name="Purohit A.A."/>
            <person name="Li W."/>
            <person name="Qu C."/>
            <person name="Dwyer T."/>
            <person name="Shao Q."/>
            <person name="Guan K.L."/>
            <person name="Liu G."/>
        </authorList>
    </citation>
    <scope>INTERACTION WITH DSCAM</scope>
    <scope>PHOSPHORYLATION</scope>
</reference>
<reference key="48">
    <citation type="journal article" date="2010" name="Histol. Histopathol.">
        <title>The role of focal adhesion kinase in early development.</title>
        <authorList>
            <person name="Chatzizacharias N.A."/>
            <person name="Kouraklis G.P."/>
            <person name="Theocharis S.E."/>
        </authorList>
    </citation>
    <scope>REVIEW ON ROLE IN DEVELOPMENT</scope>
</reference>
<reference key="49">
    <citation type="journal article" date="2011" name="Int. Rev. Cell Mol. Biol.">
        <title>Focal adhesion kinase: exploring Fak structure to gain insight into function.</title>
        <authorList>
            <person name="Hall J.E."/>
            <person name="Fu W."/>
            <person name="Schaller M.D."/>
        </authorList>
    </citation>
    <scope>REVIEW ON FUNCTION; SUBUNIT; PHOSPHORYLATION AND ACTIVITY REGULATION</scope>
</reference>
<reference key="50">
    <citation type="journal article" date="2014" name="J. Biol. Chem.">
        <title>Src kinase determines the dynamic exchange of the docking protein NEDD9 (neural precursor cell expressed developmentally down-regulated gene 9) at focal adhesions.</title>
        <authorList>
            <person name="Bradbury P."/>
            <person name="Bach C.T."/>
            <person name="Paul A."/>
            <person name="O'Neill G.M."/>
        </authorList>
    </citation>
    <scope>FUNCTION</scope>
    <scope>INTERACTION WITH NEDD9</scope>
</reference>
<reference key="51">
    <citation type="journal article" date="2017" name="Elife">
        <title>Ambra1 spatially regulates Src activity and Src/FAK-mediated cancer cell invasion via trafficking networks.</title>
        <authorList>
            <person name="Schoenherr C."/>
            <person name="Byron A."/>
            <person name="Sandilands E."/>
            <person name="Paliashvili K."/>
            <person name="Baillie G.S."/>
            <person name="Garcia-Munoz A."/>
            <person name="Valacca C."/>
            <person name="Cecconi F."/>
            <person name="Serrels B."/>
            <person name="Frame M.C."/>
        </authorList>
    </citation>
    <scope>INTERACTION WITH AMBRA1</scope>
</reference>
<reference key="52">
    <citation type="journal article" date="2002" name="Nat. Struct. Biol.">
        <title>The focal adhesion targeting (FAT) region of focal adhesion kinase is a four-helix bundle that binds paxillin.</title>
        <authorList>
            <person name="Hayashi I."/>
            <person name="Vuori K."/>
            <person name="Liddington R.C."/>
        </authorList>
    </citation>
    <scope>X-RAY CRYSTALLOGRAPHY (2.25 ANGSTROMS) OF 921-1046</scope>
    <scope>INTERACTION WITH PXN</scope>
</reference>
<proteinExistence type="evidence at protein level"/>
<gene>
    <name evidence="50" type="primary">Ptk2</name>
    <name type="synonym">Fadk</name>
    <name type="synonym">Fak</name>
    <name type="synonym">Fak1</name>
    <name type="synonym">Kiaa4203</name>
</gene>